<name>ERGI3_HUMAN</name>
<accession>Q9Y282</accession>
<accession>Q5JWS3</accession>
<accession>Q6ZWP7</accession>
<accession>Q9H276</accession>
<accession>Q9P1L3</accession>
<comment type="function">
    <text evidence="5">Possible role in transport between endoplasmic reticulum and Golgi. Positively regulates trafficking of the secretory proteins SERPINA1/alpha1-antitrypsin and HP/haptoglobin (PubMed:31142615).</text>
</comment>
<comment type="subunit">
    <text evidence="2 5">Forms homodimers (PubMed:31142615). May form a heteromeric complex composed of ERGIC1, ERGIC2 and ERGIC3 (PubMed:31142615). Within the complex, the interaction with ERGIC1 is direct (PubMed:31142615). Interacts with ERGIC1/ERGIC32 (PubMed:15308636, PubMed:31142615). Interacts with ERGIC2, the interaction is required for the stable expression of both proteins (PubMed:31142615). Interacts with MARCHF2 (PubMed:31142615). Interacts with alpha1-antitrypsin/SERPINA1 and HP/haptoglobin (PubMed:31142615).</text>
</comment>
<comment type="interaction">
    <interactant intactId="EBI-781551">
        <id>Q9Y282</id>
    </interactant>
    <interactant intactId="EBI-348517">
        <id>O95870</id>
        <label>ABHD16A</label>
    </interactant>
    <organismsDiffer>false</organismsDiffer>
    <experiments>3</experiments>
</comment>
<comment type="interaction">
    <interactant intactId="EBI-781551">
        <id>Q9Y282</id>
    </interactant>
    <interactant intactId="EBI-1754287">
        <id>Q9NRZ5</id>
        <label>AGPAT4</label>
    </interactant>
    <organismsDiffer>false</organismsDiffer>
    <experiments>3</experiments>
</comment>
<comment type="interaction">
    <interactant intactId="EBI-781551">
        <id>Q9Y282</id>
    </interactant>
    <interactant intactId="EBI-11522760">
        <id>Q6RW13-2</id>
        <label>AGTRAP</label>
    </interactant>
    <organismsDiffer>false</organismsDiffer>
    <experiments>3</experiments>
</comment>
<comment type="interaction">
    <interactant intactId="EBI-781551">
        <id>Q9Y282</id>
    </interactant>
    <interactant intactId="EBI-11957045">
        <id>Q9NVV5-2</id>
        <label>AIG1</label>
    </interactant>
    <organismsDiffer>false</organismsDiffer>
    <experiments>3</experiments>
</comment>
<comment type="interaction">
    <interactant intactId="EBI-781551">
        <id>Q9Y282</id>
    </interactant>
    <interactant intactId="EBI-13064220">
        <id>Q5BKT4</id>
        <label>ALG10</label>
    </interactant>
    <organismsDiffer>false</organismsDiffer>
    <experiments>3</experiments>
</comment>
<comment type="interaction">
    <interactant intactId="EBI-781551">
        <id>Q9Y282</id>
    </interactant>
    <interactant intactId="EBI-17685278">
        <id>O75106</id>
        <label>AOC2</label>
    </interactant>
    <organismsDiffer>false</organismsDiffer>
    <experiments>3</experiments>
</comment>
<comment type="interaction">
    <interactant intactId="EBI-781551">
        <id>Q9Y282</id>
    </interactant>
    <interactant intactId="EBI-1220113">
        <id>P02656</id>
        <label>APOC3</label>
    </interactant>
    <organismsDiffer>false</organismsDiffer>
    <experiments>3</experiments>
</comment>
<comment type="interaction">
    <interactant intactId="EBI-781551">
        <id>Q9Y282</id>
    </interactant>
    <interactant intactId="EBI-715495">
        <id>P05090</id>
        <label>APOD</label>
    </interactant>
    <organismsDiffer>false</organismsDiffer>
    <experiments>3</experiments>
</comment>
<comment type="interaction">
    <interactant intactId="EBI-781551">
        <id>Q9Y282</id>
    </interactant>
    <interactant intactId="EBI-4290634">
        <id>Q9BQE5</id>
        <label>APOL2</label>
    </interactant>
    <organismsDiffer>false</organismsDiffer>
    <experiments>3</experiments>
</comment>
<comment type="interaction">
    <interactant intactId="EBI-781551">
        <id>Q9Y282</id>
    </interactant>
    <interactant intactId="EBI-12820279">
        <id>Q96PS8</id>
        <label>AQP10</label>
    </interactant>
    <organismsDiffer>false</organismsDiffer>
    <experiments>3</experiments>
</comment>
<comment type="interaction">
    <interactant intactId="EBI-781551">
        <id>Q9Y282</id>
    </interactant>
    <interactant intactId="EBI-12701138">
        <id>P41181</id>
        <label>AQP2</label>
    </interactant>
    <organismsDiffer>false</organismsDiffer>
    <experiments>3</experiments>
</comment>
<comment type="interaction">
    <interactant intactId="EBI-781551">
        <id>Q9Y282</id>
    </interactant>
    <interactant intactId="EBI-2808854">
        <id>Q92482</id>
        <label>AQP3</label>
    </interactant>
    <organismsDiffer>false</organismsDiffer>
    <experiments>3</experiments>
</comment>
<comment type="interaction">
    <interactant intactId="EBI-781551">
        <id>Q9Y282</id>
    </interactant>
    <interactant intactId="EBI-1172335">
        <id>P07306</id>
        <label>ASGR1</label>
    </interactant>
    <organismsDiffer>false</organismsDiffer>
    <experiments>3</experiments>
</comment>
<comment type="interaction">
    <interactant intactId="EBI-781551">
        <id>Q9Y282</id>
    </interactant>
    <interactant intactId="EBI-721179">
        <id>P27449</id>
        <label>ATP6V0C</label>
    </interactant>
    <organismsDiffer>false</organismsDiffer>
    <experiments>3</experiments>
</comment>
<comment type="interaction">
    <interactant intactId="EBI-781551">
        <id>Q9Y282</id>
    </interactant>
    <interactant intactId="EBI-78035">
        <id>Q07817</id>
        <label>BCL2L1</label>
    </interactant>
    <organismsDiffer>false</organismsDiffer>
    <experiments>3</experiments>
</comment>
<comment type="interaction">
    <interactant intactId="EBI-781551">
        <id>Q9Y282</id>
    </interactant>
    <interactant intactId="EBI-707714">
        <id>Q92843</id>
        <label>BCL2L2</label>
    </interactant>
    <organismsDiffer>false</organismsDiffer>
    <experiments>3</experiments>
</comment>
<comment type="interaction">
    <interactant intactId="EBI-781551">
        <id>Q9Y282</id>
    </interactant>
    <interactant intactId="EBI-749204">
        <id>O15155</id>
        <label>BET1</label>
    </interactant>
    <organismsDiffer>false</organismsDiffer>
    <experiments>3</experiments>
</comment>
<comment type="interaction">
    <interactant intactId="EBI-781551">
        <id>Q9Y282</id>
    </interactant>
    <interactant intactId="EBI-700794">
        <id>Q13323</id>
        <label>BIK</label>
    </interactant>
    <organismsDiffer>false</organismsDiffer>
    <experiments>3</experiments>
</comment>
<comment type="interaction">
    <interactant intactId="EBI-781551">
        <id>Q9Y282</id>
    </interactant>
    <interactant intactId="EBI-749464">
        <id>Q12983</id>
        <label>BNIP3</label>
    </interactant>
    <organismsDiffer>false</organismsDiffer>
    <experiments>3</experiments>
</comment>
<comment type="interaction">
    <interactant intactId="EBI-781551">
        <id>Q9Y282</id>
    </interactant>
    <interactant intactId="EBI-8648738">
        <id>Q8WVV5</id>
        <label>BTN2A2</label>
    </interactant>
    <organismsDiffer>false</organismsDiffer>
    <experiments>3</experiments>
</comment>
<comment type="interaction">
    <interactant intactId="EBI-781551">
        <id>Q9Y282</id>
    </interactant>
    <interactant intactId="EBI-2835920">
        <id>P06681</id>
        <label>C2</label>
    </interactant>
    <organismsDiffer>false</organismsDiffer>
    <experiments>3</experiments>
</comment>
<comment type="interaction">
    <interactant intactId="EBI-781551">
        <id>Q9Y282</id>
    </interactant>
    <interactant intactId="EBI-12822627">
        <id>O14523</id>
        <label>C2CD2L</label>
    </interactant>
    <organismsDiffer>false</organismsDiffer>
    <experiments>3</experiments>
</comment>
<comment type="interaction">
    <interactant intactId="EBI-781551">
        <id>Q9Y282</id>
    </interactant>
    <interactant intactId="EBI-12003442">
        <id>Q8WVX3-2</id>
        <label>C4orf3</label>
    </interactant>
    <organismsDiffer>false</organismsDiffer>
    <experiments>3</experiments>
</comment>
<comment type="interaction">
    <interactant intactId="EBI-781551">
        <id>Q9Y282</id>
    </interactant>
    <interactant intactId="EBI-9083477">
        <id>Q9P0B6</id>
        <label>CCDC167</label>
    </interactant>
    <organismsDiffer>false</organismsDiffer>
    <experiments>3</experiments>
</comment>
<comment type="interaction">
    <interactant intactId="EBI-781551">
        <id>Q9Y282</id>
    </interactant>
    <interactant intactId="EBI-2873235">
        <id>Q9UJ71</id>
        <label>CD207</label>
    </interactant>
    <organismsDiffer>false</organismsDiffer>
    <experiments>3</experiments>
</comment>
<comment type="interaction">
    <interactant intactId="EBI-781551">
        <id>Q9Y282</id>
    </interactant>
    <interactant intactId="EBI-14259393">
        <id>Q8IX05</id>
        <label>CD302</label>
    </interactant>
    <organismsDiffer>false</organismsDiffer>
    <experiments>3</experiments>
</comment>
<comment type="interaction">
    <interactant intactId="EBI-781551">
        <id>Q9Y282</id>
    </interactant>
    <interactant intactId="EBI-712921">
        <id>P60033</id>
        <label>CD81</label>
    </interactant>
    <organismsDiffer>false</organismsDiffer>
    <experiments>3</experiments>
</comment>
<comment type="interaction">
    <interactant intactId="EBI-781551">
        <id>Q9Y282</id>
    </interactant>
    <interactant intactId="EBI-358858">
        <id>O14735</id>
        <label>CDIPT</label>
    </interactant>
    <organismsDiffer>false</organismsDiffer>
    <experiments>3</experiments>
</comment>
<comment type="interaction">
    <interactant intactId="EBI-781551">
        <id>Q9Y282</id>
    </interactant>
    <interactant intactId="EBI-3913685">
        <id>O95674</id>
        <label>CDS2</label>
    </interactant>
    <organismsDiffer>false</organismsDiffer>
    <experiments>3</experiments>
</comment>
<comment type="interaction">
    <interactant intactId="EBI-781551">
        <id>Q9Y282</id>
    </interactant>
    <interactant intactId="EBI-11579371">
        <id>Q9BXR6</id>
        <label>CFHR5</label>
    </interactant>
    <organismsDiffer>false</organismsDiffer>
    <experiments>3</experiments>
</comment>
<comment type="interaction">
    <interactant intactId="EBI-781551">
        <id>Q9Y282</id>
    </interactant>
    <interactant intactId="EBI-752069">
        <id>Q9H5X1</id>
        <label>CIAO2A</label>
    </interactant>
    <organismsDiffer>false</organismsDiffer>
    <experiments>3</experiments>
</comment>
<comment type="interaction">
    <interactant intactId="EBI-781551">
        <id>Q9Y282</id>
    </interactant>
    <interactant intactId="EBI-12256978">
        <id>Q8N6F1-2</id>
        <label>CLDN19</label>
    </interactant>
    <organismsDiffer>false</organismsDiffer>
    <experiments>3</experiments>
</comment>
<comment type="interaction">
    <interactant intactId="EBI-781551">
        <id>Q9Y282</id>
    </interactant>
    <interactant intactId="EBI-10215641">
        <id>P56748</id>
        <label>CLDN8</label>
    </interactant>
    <organismsDiffer>false</organismsDiffer>
    <experiments>3</experiments>
</comment>
<comment type="interaction">
    <interactant intactId="EBI-781551">
        <id>Q9Y282</id>
    </interactant>
    <interactant intactId="EBI-11959453">
        <id>Q8NHS1</id>
        <label>CLDND2</label>
    </interactant>
    <organismsDiffer>false</organismsDiffer>
    <experiments>3</experiments>
</comment>
<comment type="interaction">
    <interactant intactId="EBI-781551">
        <id>Q9Y282</id>
    </interactant>
    <interactant intactId="EBI-11522780">
        <id>Q96DZ9-2</id>
        <label>CMTM5</label>
    </interactant>
    <organismsDiffer>false</organismsDiffer>
    <experiments>3</experiments>
</comment>
<comment type="interaction">
    <interactant intactId="EBI-781551">
        <id>Q9Y282</id>
    </interactant>
    <interactant intactId="EBI-12172273">
        <id>O95406</id>
        <label>CNIH1</label>
    </interactant>
    <organismsDiffer>false</organismsDiffer>
    <experiments>3</experiments>
</comment>
<comment type="interaction">
    <interactant intactId="EBI-781551">
        <id>Q9Y282</id>
    </interactant>
    <interactant intactId="EBI-12208021">
        <id>Q8TBE1</id>
        <label>CNIH3</label>
    </interactant>
    <organismsDiffer>false</organismsDiffer>
    <experiments>3</experiments>
</comment>
<comment type="interaction">
    <interactant intactId="EBI-781551">
        <id>Q9Y282</id>
    </interactant>
    <interactant intactId="EBI-12211159">
        <id>P29400-2</id>
        <label>COL4A5</label>
    </interactant>
    <organismsDiffer>false</organismsDiffer>
    <experiments>3</experiments>
</comment>
<comment type="interaction">
    <interactant intactId="EBI-781551">
        <id>Q9Y282</id>
    </interactant>
    <interactant intactId="EBI-2834035">
        <id>Q5RI15</id>
        <label>COX20</label>
    </interactant>
    <organismsDiffer>false</organismsDiffer>
    <experiments>3</experiments>
</comment>
<comment type="interaction">
    <interactant intactId="EBI-781551">
        <id>Q9Y282</id>
    </interactant>
    <interactant intactId="EBI-12019274">
        <id>Q4LDR2</id>
        <label>CTXN3</label>
    </interactant>
    <organismsDiffer>false</organismsDiffer>
    <experiments>3</experiments>
</comment>
<comment type="interaction">
    <interactant intactId="EBI-781551">
        <id>Q9Y282</id>
    </interactant>
    <interactant intactId="EBI-12823659">
        <id>Q5JRM2</id>
        <label>CXorf66</label>
    </interactant>
    <organismsDiffer>false</organismsDiffer>
    <experiments>3</experiments>
</comment>
<comment type="interaction">
    <interactant intactId="EBI-781551">
        <id>Q9Y282</id>
    </interactant>
    <interactant intactId="EBI-8646596">
        <id>P49447</id>
        <label>CYB561</label>
    </interactant>
    <organismsDiffer>false</organismsDiffer>
    <experiments>3</experiments>
</comment>
<comment type="interaction">
    <interactant intactId="EBI-781551">
        <id>Q9Y282</id>
    </interactant>
    <interactant intactId="EBI-717654">
        <id>O14569</id>
        <label>CYB561D2</label>
    </interactant>
    <organismsDiffer>false</organismsDiffer>
    <experiments>3</experiments>
</comment>
<comment type="interaction">
    <interactant intactId="EBI-781551">
        <id>Q9Y282</id>
    </interactant>
    <interactant intactId="EBI-2680384">
        <id>Q9BQA9</id>
        <label>CYBC1</label>
    </interactant>
    <organismsDiffer>false</organismsDiffer>
    <experiments>3</experiments>
</comment>
<comment type="interaction">
    <interactant intactId="EBI-781551">
        <id>Q9Y282</id>
    </interactant>
    <interactant intactId="EBI-1752413">
        <id>P78329</id>
        <label>CYP4F2</label>
    </interactant>
    <organismsDiffer>false</organismsDiffer>
    <experiments>3</experiments>
</comment>
<comment type="interaction">
    <interactant intactId="EBI-781551">
        <id>Q9Y282</id>
    </interactant>
    <interactant intactId="EBI-12074168">
        <id>P81534</id>
        <label>DEFB103B</label>
    </interactant>
    <organismsDiffer>false</organismsDiffer>
    <experiments>3</experiments>
</comment>
<comment type="interaction">
    <interactant intactId="EBI-781551">
        <id>Q9Y282</id>
    </interactant>
    <interactant intactId="EBI-3915253">
        <id>Q15125</id>
        <label>EBP</label>
    </interactant>
    <organismsDiffer>false</organismsDiffer>
    <experiments>3</experiments>
</comment>
<comment type="interaction">
    <interactant intactId="EBI-781551">
        <id>Q9Y282</id>
    </interactant>
    <interactant intactId="EBI-2339219">
        <id>Q08426</id>
        <label>EHHADH</label>
    </interactant>
    <organismsDiffer>false</organismsDiffer>
    <experiments>3</experiments>
</comment>
<comment type="interaction">
    <interactant intactId="EBI-781551">
        <id>Q9Y282</id>
    </interactant>
    <interactant intactId="EBI-2820492">
        <id>Q9BV81</id>
        <label>EMC6</label>
    </interactant>
    <organismsDiffer>false</organismsDiffer>
    <experiments>3</experiments>
</comment>
<comment type="interaction">
    <interactant intactId="EBI-781551">
        <id>Q9Y282</id>
    </interactant>
    <interactant intactId="EBI-4319440">
        <id>P54849</id>
        <label>EMP1</label>
    </interactant>
    <organismsDiffer>false</organismsDiffer>
    <experiments>3</experiments>
</comment>
<comment type="interaction">
    <interactant intactId="EBI-781551">
        <id>Q9Y282</id>
    </interactant>
    <interactant intactId="EBI-3907816">
        <id>P54852</id>
        <label>EMP3</label>
    </interactant>
    <organismsDiffer>false</organismsDiffer>
    <experiments>3</experiments>
</comment>
<comment type="interaction">
    <interactant intactId="EBI-781551">
        <id>Q9Y282</id>
    </interactant>
    <interactant intactId="EBI-12279764">
        <id>O75355-2</id>
        <label>ENTPD3</label>
    </interactant>
    <organismsDiffer>false</organismsDiffer>
    <experiments>3</experiments>
</comment>
<comment type="interaction">
    <interactant intactId="EBI-781551">
        <id>Q9Y282</id>
    </interactant>
    <interactant intactId="EBI-781527">
        <id>Q969X5</id>
        <label>ERGIC1</label>
    </interactant>
    <organismsDiffer>false</organismsDiffer>
    <experiments>4</experiments>
</comment>
<comment type="interaction">
    <interactant intactId="EBI-781551">
        <id>Q9Y282</id>
    </interactant>
    <interactant intactId="EBI-4403663">
        <id>Q96RQ1</id>
        <label>ERGIC2</label>
    </interactant>
    <organismsDiffer>false</organismsDiffer>
    <experiments>3</experiments>
</comment>
<comment type="interaction">
    <interactant intactId="EBI-781551">
        <id>Q9Y282</id>
    </interactant>
    <interactant intactId="EBI-1760167">
        <id>Q92935</id>
        <label>EXTL1</label>
    </interactant>
    <organismsDiffer>false</organismsDiffer>
    <experiments>3</experiments>
</comment>
<comment type="interaction">
    <interactant intactId="EBI-781551">
        <id>Q9Y282</id>
    </interactant>
    <interactant intactId="EBI-11337888">
        <id>Q7L5A8</id>
        <label>FA2H</label>
    </interactant>
    <organismsDiffer>false</organismsDiffer>
    <experiments>3</experiments>
</comment>
<comment type="interaction">
    <interactant intactId="EBI-781551">
        <id>Q9Y282</id>
    </interactant>
    <interactant intactId="EBI-2876774">
        <id>Q92520</id>
        <label>FAM3C</label>
    </interactant>
    <organismsDiffer>false</organismsDiffer>
    <experiments>3</experiments>
</comment>
<comment type="interaction">
    <interactant intactId="EBI-781551">
        <id>Q9Y282</id>
    </interactant>
    <interactant intactId="EBI-12142299">
        <id>Q96IV6</id>
        <label>FAXDC2</label>
    </interactant>
    <organismsDiffer>false</organismsDiffer>
    <experiments>3</experiments>
</comment>
<comment type="interaction">
    <interactant intactId="EBI-781551">
        <id>Q9Y282</id>
    </interactant>
    <interactant intactId="EBI-13049494">
        <id>Q9UGM5</id>
        <label>FETUB</label>
    </interactant>
    <organismsDiffer>false</organismsDiffer>
    <experiments>3</experiments>
</comment>
<comment type="interaction">
    <interactant intactId="EBI-781551">
        <id>Q9Y282</id>
    </interactant>
    <interactant intactId="EBI-3385283">
        <id>Q9Y3D6</id>
        <label>FIS1</label>
    </interactant>
    <organismsDiffer>false</organismsDiffer>
    <experiments>3</experiments>
</comment>
<comment type="interaction">
    <interactant intactId="EBI-781551">
        <id>Q9Y282</id>
    </interactant>
    <interactant intactId="EBI-724839">
        <id>Q14318</id>
        <label>FKBP8</label>
    </interactant>
    <organismsDiffer>false</organismsDiffer>
    <experiments>3</experiments>
</comment>
<comment type="interaction">
    <interactant intactId="EBI-781551">
        <id>Q9Y282</id>
    </interactant>
    <interactant intactId="EBI-13084584">
        <id>P54710-2</id>
        <label>FXYD2</label>
    </interactant>
    <organismsDiffer>false</organismsDiffer>
    <experiments>3</experiments>
</comment>
<comment type="interaction">
    <interactant intactId="EBI-781551">
        <id>Q9Y282</id>
    </interactant>
    <interactant intactId="EBI-12175685">
        <id>Q14802-3</id>
        <label>FXYD3</label>
    </interactant>
    <organismsDiffer>false</organismsDiffer>
    <experiments>3</experiments>
</comment>
<comment type="interaction">
    <interactant intactId="EBI-781551">
        <id>Q9Y282</id>
    </interactant>
    <interactant intactId="EBI-713304">
        <id>Q9H0Q3</id>
        <label>FXYD6</label>
    </interactant>
    <organismsDiffer>false</organismsDiffer>
    <experiments>3</experiments>
</comment>
<comment type="interaction">
    <interactant intactId="EBI-781551">
        <id>Q9Y282</id>
    </interactant>
    <interactant intactId="EBI-3436637">
        <id>P01350</id>
        <label>GAST</label>
    </interactant>
    <organismsDiffer>false</organismsDiffer>
    <experiments>3</experiments>
</comment>
<comment type="interaction">
    <interactant intactId="EBI-781551">
        <id>Q9Y282</id>
    </interactant>
    <interactant intactId="EBI-11991950">
        <id>Q8WWP7</id>
        <label>GIMAP1</label>
    </interactant>
    <organismsDiffer>false</organismsDiffer>
    <experiments>3</experiments>
</comment>
<comment type="interaction">
    <interactant intactId="EBI-781551">
        <id>Q9Y282</id>
    </interactant>
    <interactant intactId="EBI-6166686">
        <id>Q96F15</id>
        <label>GIMAP5</label>
    </interactant>
    <organismsDiffer>false</organismsDiffer>
    <experiments>3</experiments>
</comment>
<comment type="interaction">
    <interactant intactId="EBI-781551">
        <id>Q9Y282</id>
    </interactant>
    <interactant intactId="EBI-3905204">
        <id>P29033</id>
        <label>GJB2</label>
    </interactant>
    <organismsDiffer>false</organismsDiffer>
    <experiments>3</experiments>
</comment>
<comment type="interaction">
    <interactant intactId="EBI-781551">
        <id>Q9Y282</id>
    </interactant>
    <interactant intactId="EBI-11992640">
        <id>Q13491-3</id>
        <label>GPM6B</label>
    </interactant>
    <organismsDiffer>false</organismsDiffer>
    <experiments>3</experiments>
</comment>
<comment type="interaction">
    <interactant intactId="EBI-781551">
        <id>Q9Y282</id>
    </interactant>
    <interactant intactId="EBI-11955647">
        <id>Q8TDV0</id>
        <label>GPR151</label>
    </interactant>
    <organismsDiffer>false</organismsDiffer>
    <experiments>3</experiments>
</comment>
<comment type="interaction">
    <interactant intactId="EBI-781551">
        <id>Q9Y282</id>
    </interactant>
    <interactant intactId="EBI-702665">
        <id>P02724</id>
        <label>GYPA</label>
    </interactant>
    <organismsDiffer>false</organismsDiffer>
    <experiments>3</experiments>
</comment>
<comment type="interaction">
    <interactant intactId="EBI-781551">
        <id>Q9Y282</id>
    </interactant>
    <interactant intactId="EBI-5916693">
        <id>Q9HCP6</id>
        <label>HHATL</label>
    </interactant>
    <organismsDiffer>false</organismsDiffer>
    <experiments>3</experiments>
</comment>
<comment type="interaction">
    <interactant intactId="EBI-781551">
        <id>Q9Y282</id>
    </interactant>
    <interactant intactId="EBI-2806151">
        <id>P09601</id>
        <label>HMOX1</label>
    </interactant>
    <organismsDiffer>false</organismsDiffer>
    <experiments>3</experiments>
</comment>
<comment type="interaction">
    <interactant intactId="EBI-781551">
        <id>Q9Y282</id>
    </interactant>
    <interactant intactId="EBI-712096">
        <id>P30519</id>
        <label>HMOX2</label>
    </interactant>
    <organismsDiffer>false</organismsDiffer>
    <experiments>3</experiments>
</comment>
<comment type="interaction">
    <interactant intactId="EBI-781551">
        <id>Q9Y282</id>
    </interactant>
    <interactant intactId="EBI-1220767">
        <id>P00738</id>
        <label>HP</label>
    </interactant>
    <organismsDiffer>false</organismsDiffer>
    <experiments>2</experiments>
</comment>
<comment type="interaction">
    <interactant intactId="EBI-781551">
        <id>Q9Y282</id>
    </interactant>
    <interactant intactId="EBI-7932862">
        <id>Q01628</id>
        <label>IFITM3</label>
    </interactant>
    <organismsDiffer>false</organismsDiffer>
    <experiments>3</experiments>
</comment>
<comment type="interaction">
    <interactant intactId="EBI-781551">
        <id>Q9Y282</id>
    </interactant>
    <interactant intactId="EBI-720480">
        <id>P24593</id>
        <label>IGFBP5</label>
    </interactant>
    <organismsDiffer>false</organismsDiffer>
    <experiments>3</experiments>
</comment>
<comment type="interaction">
    <interactant intactId="EBI-781551">
        <id>Q9Y282</id>
    </interactant>
    <interactant intactId="EBI-2568251">
        <id>P11215</id>
        <label>ITGAM</label>
    </interactant>
    <organismsDiffer>false</organismsDiffer>
    <experiments>3</experiments>
</comment>
<comment type="interaction">
    <interactant intactId="EBI-781551">
        <id>Q9Y282</id>
    </interactant>
    <interactant intactId="EBI-10266796">
        <id>Q8N5M9</id>
        <label>JAGN1</label>
    </interactant>
    <organismsDiffer>false</organismsDiffer>
    <experiments>3</experiments>
</comment>
<comment type="interaction">
    <interactant intactId="EBI-781551">
        <id>Q9Y282</id>
    </interactant>
    <interactant intactId="EBI-3914675">
        <id>O00180</id>
        <label>KCNK1</label>
    </interactant>
    <organismsDiffer>false</organismsDiffer>
    <experiments>3</experiments>
</comment>
<comment type="interaction">
    <interactant intactId="EBI-781551">
        <id>Q9Y282</id>
    </interactant>
    <interactant intactId="EBI-2820517">
        <id>Q8TAF8</id>
        <label>LHFPL5</label>
    </interactant>
    <organismsDiffer>false</organismsDiffer>
    <experiments>3</experiments>
</comment>
<comment type="interaction">
    <interactant intactId="EBI-781551">
        <id>Q9Y282</id>
    </interactant>
    <interactant intactId="EBI-12033434">
        <id>Q9UBY5</id>
        <label>LPAR3</label>
    </interactant>
    <organismsDiffer>false</organismsDiffer>
    <experiments>3</experiments>
</comment>
<comment type="interaction">
    <interactant intactId="EBI-781551">
        <id>Q9Y282</id>
    </interactant>
    <interactant intactId="EBI-4280011">
        <id>Q7L5N7</id>
        <label>LPCAT2</label>
    </interactant>
    <organismsDiffer>false</organismsDiffer>
    <experiments>3</experiments>
</comment>
<comment type="interaction">
    <interactant intactId="EBI-781551">
        <id>Q9Y282</id>
    </interactant>
    <interactant intactId="EBI-10317612">
        <id>Q9P0N8</id>
        <label>MARCHF2</label>
    </interactant>
    <organismsDiffer>false</organismsDiffer>
    <experiments>8</experiments>
</comment>
<comment type="interaction">
    <interactant intactId="EBI-781551">
        <id>Q9Y282</id>
    </interactant>
    <interactant intactId="EBI-2341610">
        <id>Q9NX47</id>
        <label>MARCHF5</label>
    </interactant>
    <organismsDiffer>false</organismsDiffer>
    <experiments>3</experiments>
</comment>
<comment type="interaction">
    <interactant intactId="EBI-781551">
        <id>Q9Y282</id>
    </interactant>
    <interactant intactId="EBI-11956541">
        <id>Q9GZY8-5</id>
        <label>MFF</label>
    </interactant>
    <organismsDiffer>false</organismsDiffer>
    <experiments>3</experiments>
</comment>
<comment type="interaction">
    <interactant intactId="EBI-781551">
        <id>Q9Y282</id>
    </interactant>
    <interactant intactId="EBI-2858252">
        <id>Q6ZSS7</id>
        <label>MFSD6</label>
    </interactant>
    <organismsDiffer>false</organismsDiffer>
    <experiments>3</experiments>
</comment>
<comment type="interaction">
    <interactant intactId="EBI-781551">
        <id>Q9Y282</id>
    </interactant>
    <interactant intactId="EBI-8449636">
        <id>P30301</id>
        <label>MIP</label>
    </interactant>
    <organismsDiffer>false</organismsDiffer>
    <experiments>3</experiments>
</comment>
<comment type="interaction">
    <interactant intactId="EBI-781551">
        <id>Q9Y282</id>
    </interactant>
    <interactant intactId="EBI-12070086">
        <id>Q5J8X5</id>
        <label>MS4A13</label>
    </interactant>
    <organismsDiffer>false</organismsDiffer>
    <experiments>3</experiments>
</comment>
<comment type="interaction">
    <interactant intactId="EBI-781551">
        <id>Q9Y282</id>
    </interactant>
    <interactant intactId="EBI-13301517">
        <id>Q96S97</id>
        <label>MYADM</label>
    </interactant>
    <organismsDiffer>false</organismsDiffer>
    <experiments>3</experiments>
</comment>
<comment type="interaction">
    <interactant intactId="EBI-781551">
        <id>Q9Y282</id>
    </interactant>
    <interactant intactId="EBI-709754">
        <id>Q9HB07</id>
        <label>MYG1</label>
    </interactant>
    <organismsDiffer>false</organismsDiffer>
    <experiments>3</experiments>
</comment>
<comment type="interaction">
    <interactant intactId="EBI-781551">
        <id>Q9Y282</id>
    </interactant>
    <interactant intactId="EBI-11978907">
        <id>Q9ULP0-2</id>
        <label>NDRG4</label>
    </interactant>
    <organismsDiffer>false</organismsDiffer>
    <experiments>3</experiments>
</comment>
<comment type="interaction">
    <interactant intactId="EBI-781551">
        <id>Q9Y282</id>
    </interactant>
    <interactant intactId="EBI-1053340">
        <id>O95139</id>
        <label>NDUFB6</label>
    </interactant>
    <organismsDiffer>false</organismsDiffer>
    <experiments>3</experiments>
</comment>
<comment type="interaction">
    <interactant intactId="EBI-781551">
        <id>Q9Y282</id>
    </interactant>
    <interactant intactId="EBI-721517">
        <id>Q99519</id>
        <label>NEU1</label>
    </interactant>
    <organismsDiffer>false</organismsDiffer>
    <experiments>3</experiments>
</comment>
<comment type="interaction">
    <interactant intactId="EBI-781551">
        <id>Q9Y282</id>
    </interactant>
    <interactant intactId="EBI-10317425">
        <id>Q9NZG7</id>
        <label>NINJ2</label>
    </interactant>
    <organismsDiffer>false</organismsDiffer>
    <experiments>3</experiments>
</comment>
<comment type="interaction">
    <interactant intactId="EBI-781551">
        <id>Q9Y282</id>
    </interactant>
    <interactant intactId="EBI-3919611">
        <id>Q16617</id>
        <label>NKG7</label>
    </interactant>
    <organismsDiffer>false</organismsDiffer>
    <experiments>3</experiments>
</comment>
<comment type="interaction">
    <interactant intactId="EBI-781551">
        <id>Q9Y282</id>
    </interactant>
    <interactant intactId="EBI-12051377">
        <id>Q8N912</id>
        <label>NRAC</label>
    </interactant>
    <organismsDiffer>false</organismsDiffer>
    <experiments>3</experiments>
</comment>
<comment type="interaction">
    <interactant intactId="EBI-781551">
        <id>Q9Y282</id>
    </interactant>
    <interactant intactId="EBI-8637292">
        <id>Q8WWG1</id>
        <label>NRG4</label>
    </interactant>
    <organismsDiffer>false</organismsDiffer>
    <experiments>3</experiments>
</comment>
<comment type="interaction">
    <interactant intactId="EBI-781551">
        <id>Q9Y282</id>
    </interactant>
    <interactant intactId="EBI-10262547">
        <id>Q8IXM6</id>
        <label>NRM</label>
    </interactant>
    <organismsDiffer>false</organismsDiffer>
    <experiments>3</experiments>
</comment>
<comment type="interaction">
    <interactant intactId="EBI-781551">
        <id>Q9Y282</id>
    </interactant>
    <interactant intactId="EBI-6380741">
        <id>P42857</id>
        <label>NSG1</label>
    </interactant>
    <organismsDiffer>false</organismsDiffer>
    <experiments>3</experiments>
</comment>
<comment type="interaction">
    <interactant intactId="EBI-781551">
        <id>Q9Y282</id>
    </interactant>
    <interactant intactId="EBI-1054848">
        <id>Q9P0S3</id>
        <label>ORMDL1</label>
    </interactant>
    <organismsDiffer>false</organismsDiffer>
    <experiments>3</experiments>
</comment>
<comment type="interaction">
    <interactant intactId="EBI-781551">
        <id>Q9Y282</id>
    </interactant>
    <interactant intactId="EBI-721750">
        <id>Q8N138</id>
        <label>ORMDL3</label>
    </interactant>
    <organismsDiffer>false</organismsDiffer>
    <experiments>3</experiments>
</comment>
<comment type="interaction">
    <interactant intactId="EBI-781551">
        <id>Q9Y282</id>
    </interactant>
    <interactant intactId="EBI-10316423">
        <id>Q9NXK6</id>
        <label>PAQR5</label>
    </interactant>
    <organismsDiffer>false</organismsDiffer>
    <experiments>3</experiments>
</comment>
<comment type="interaction">
    <interactant intactId="EBI-781551">
        <id>Q9Y282</id>
    </interactant>
    <interactant intactId="EBI-10694587">
        <id>Q86WK9</id>
        <label>PAQR7</label>
    </interactant>
    <organismsDiffer>false</organismsDiffer>
    <experiments>3</experiments>
</comment>
<comment type="interaction">
    <interactant intactId="EBI-781551">
        <id>Q9Y282</id>
    </interactant>
    <interactant intactId="EBI-17284886">
        <id>Q96HA9</id>
        <label>PEX11G</label>
    </interactant>
    <organismsDiffer>false</organismsDiffer>
    <experiments>3</experiments>
</comment>
<comment type="interaction">
    <interactant intactId="EBI-781551">
        <id>Q9Y282</id>
    </interactant>
    <interactant intactId="EBI-981985">
        <id>Q9Y5Y5</id>
        <label>PEX16</label>
    </interactant>
    <organismsDiffer>false</organismsDiffer>
    <experiments>3</experiments>
</comment>
<comment type="interaction">
    <interactant intactId="EBI-781551">
        <id>Q9Y282</id>
    </interactant>
    <interactant intactId="EBI-12092917">
        <id>Q9UHJ9-5</id>
        <label>PGAP2</label>
    </interactant>
    <organismsDiffer>false</organismsDiffer>
    <experiments>3</experiments>
</comment>
<comment type="interaction">
    <interactant intactId="EBI-781551">
        <id>Q9Y282</id>
    </interactant>
    <interactant intactId="EBI-3919291">
        <id>Q9Y342</id>
        <label>PLLP</label>
    </interactant>
    <organismsDiffer>false</organismsDiffer>
    <experiments>3</experiments>
</comment>
<comment type="interaction">
    <interactant intactId="EBI-781551">
        <id>Q9Y282</id>
    </interactant>
    <interactant intactId="EBI-12188331">
        <id>P60201-2</id>
        <label>PLP1</label>
    </interactant>
    <organismsDiffer>false</organismsDiffer>
    <experiments>3</experiments>
</comment>
<comment type="interaction">
    <interactant intactId="EBI-781551">
        <id>Q9Y282</id>
    </interactant>
    <interactant intactId="EBI-10485931">
        <id>Q5VZY2</id>
        <label>PLPP4</label>
    </interactant>
    <organismsDiffer>false</organismsDiffer>
    <experiments>3</experiments>
</comment>
<comment type="interaction">
    <interactant intactId="EBI-781551">
        <id>Q9Y282</id>
    </interactant>
    <interactant intactId="EBI-2845982">
        <id>Q01453</id>
        <label>PMP22</label>
    </interactant>
    <organismsDiffer>false</organismsDiffer>
    <experiments>3</experiments>
</comment>
<comment type="interaction">
    <interactant intactId="EBI-781551">
        <id>Q9Y282</id>
    </interactant>
    <interactant intactId="EBI-3912424">
        <id>Q8WZA1</id>
        <label>POMGNT1</label>
    </interactant>
    <organismsDiffer>false</organismsDiffer>
    <experiments>3</experiments>
</comment>
<comment type="interaction">
    <interactant intactId="EBI-781551">
        <id>Q9Y282</id>
    </interactant>
    <interactant intactId="EBI-14210385">
        <id>Q59EV6</id>
        <label>PPGB</label>
    </interactant>
    <organismsDiffer>false</organismsDiffer>
    <experiments>3</experiments>
</comment>
<comment type="interaction">
    <interactant intactId="EBI-781551">
        <id>Q9Y282</id>
    </interactant>
    <interactant intactId="EBI-6269616">
        <id>Q96AA3</id>
        <label>RFT1</label>
    </interactant>
    <organismsDiffer>false</organismsDiffer>
    <experiments>3</experiments>
</comment>
<comment type="interaction">
    <interactant intactId="EBI-781551">
        <id>Q9Y282</id>
    </interactant>
    <interactant intactId="EBI-14772355">
        <id>Q02094</id>
        <label>RHAG</label>
    </interactant>
    <organismsDiffer>false</organismsDiffer>
    <experiments>3</experiments>
</comment>
<comment type="interaction">
    <interactant intactId="EBI-781551">
        <id>Q9Y282</id>
    </interactant>
    <interactant intactId="EBI-10244780">
        <id>Q5QGT7</id>
        <label>RTP2</label>
    </interactant>
    <organismsDiffer>false</organismsDiffer>
    <experiments>3</experiments>
</comment>
<comment type="interaction">
    <interactant intactId="EBI-781551">
        <id>Q9Y282</id>
    </interactant>
    <interactant intactId="EBI-8636004">
        <id>Q96GQ5</id>
        <label>RUSF1</label>
    </interactant>
    <organismsDiffer>false</organismsDiffer>
    <experiments>3</experiments>
</comment>
<comment type="interaction">
    <interactant intactId="EBI-781551">
        <id>Q9Y282</id>
    </interactant>
    <interactant intactId="EBI-1564650">
        <id>Q14108</id>
        <label>SCARB2</label>
    </interactant>
    <organismsDiffer>false</organismsDiffer>
    <experiments>3</experiments>
</comment>
<comment type="interaction">
    <interactant intactId="EBI-781551">
        <id>Q9Y282</id>
    </interactant>
    <interactant intactId="EBI-2684237">
        <id>O00767</id>
        <label>SCD</label>
    </interactant>
    <organismsDiffer>false</organismsDiffer>
    <experiments>3</experiments>
</comment>
<comment type="interaction">
    <interactant intactId="EBI-781551">
        <id>Q9Y282</id>
    </interactant>
    <interactant intactId="EBI-1058865">
        <id>O75396</id>
        <label>SEC22B</label>
    </interactant>
    <organismsDiffer>false</organismsDiffer>
    <experiments>3</experiments>
</comment>
<comment type="interaction">
    <interactant intactId="EBI-781551">
        <id>Q9Y282</id>
    </interactant>
    <interactant intactId="EBI-81088">
        <id>Q15436</id>
        <label>SEC23A</label>
    </interactant>
    <organismsDiffer>false</organismsDiffer>
    <experiments>3</experiments>
</comment>
<comment type="interaction">
    <interactant intactId="EBI-781551">
        <id>Q9Y282</id>
    </interactant>
    <interactant intactId="EBI-9679163">
        <id>Q9Y6D0</id>
        <label>SELENOK</label>
    </interactant>
    <organismsDiffer>false</organismsDiffer>
    <experiments>3</experiments>
</comment>
<comment type="interaction">
    <interactant intactId="EBI-781551">
        <id>Q9Y282</id>
    </interactant>
    <interactant intactId="EBI-749270">
        <id>Q8N6R1</id>
        <label>SERP2</label>
    </interactant>
    <organismsDiffer>false</organismsDiffer>
    <experiments>3</experiments>
</comment>
<comment type="interaction">
    <interactant intactId="EBI-781551">
        <id>Q9Y282</id>
    </interactant>
    <interactant intactId="EBI-986224">
        <id>P01009</id>
        <label>SERPINA1</label>
    </interactant>
    <organismsDiffer>false</organismsDiffer>
    <experiments>2</experiments>
</comment>
<comment type="interaction">
    <interactant intactId="EBI-781551">
        <id>Q9Y282</id>
    </interactant>
    <interactant intactId="EBI-17274136">
        <id>Q8TD22</id>
        <label>SFXN5</label>
    </interactant>
    <organismsDiffer>false</organismsDiffer>
    <experiments>4</experiments>
</comment>
<comment type="interaction">
    <interactant intactId="EBI-781551">
        <id>Q9Y282</id>
    </interactant>
    <interactant intactId="EBI-12938720">
        <id>Q8WWT9</id>
        <label>SLC13A3</label>
    </interactant>
    <organismsDiffer>false</organismsDiffer>
    <experiments>3</experiments>
</comment>
<comment type="interaction">
    <interactant intactId="EBI-781551">
        <id>Q9Y282</id>
    </interactant>
    <interactant intactId="EBI-745376">
        <id>P43005</id>
        <label>SLC1A1</label>
    </interactant>
    <organismsDiffer>false</organismsDiffer>
    <experiments>3</experiments>
</comment>
<comment type="interaction">
    <interactant intactId="EBI-781551">
        <id>Q9Y282</id>
    </interactant>
    <interactant intactId="EBI-10262251">
        <id>Q8IWU4</id>
        <label>SLC30A8</label>
    </interactant>
    <organismsDiffer>false</organismsDiffer>
    <experiments>3</experiments>
</comment>
<comment type="interaction">
    <interactant intactId="EBI-781551">
        <id>Q9Y282</id>
    </interactant>
    <interactant intactId="EBI-12870360">
        <id>P78382</id>
        <label>SLC35A1</label>
    </interactant>
    <organismsDiffer>false</organismsDiffer>
    <experiments>3</experiments>
</comment>
<comment type="interaction">
    <interactant intactId="EBI-781551">
        <id>Q9Y282</id>
    </interactant>
    <interactant intactId="EBI-12363689">
        <id>Q96G79</id>
        <label>SLC35A4</label>
    </interactant>
    <organismsDiffer>false</organismsDiffer>
    <experiments>3</experiments>
</comment>
<comment type="interaction">
    <interactant intactId="EBI-781551">
        <id>Q9Y282</id>
    </interactant>
    <interactant intactId="EBI-1054782">
        <id>Q8TB61</id>
        <label>SLC35B2</label>
    </interactant>
    <organismsDiffer>false</organismsDiffer>
    <experiments>3</experiments>
</comment>
<comment type="interaction">
    <interactant intactId="EBI-781551">
        <id>Q9Y282</id>
    </interactant>
    <interactant intactId="EBI-10281213">
        <id>Q969S0</id>
        <label>SLC35B4</label>
    </interactant>
    <organismsDiffer>false</organismsDiffer>
    <experiments>3</experiments>
</comment>
<comment type="interaction">
    <interactant intactId="EBI-781551">
        <id>Q9Y282</id>
    </interactant>
    <interactant intactId="EBI-10314552">
        <id>Q9NVC3</id>
        <label>SLC38A7</label>
    </interactant>
    <organismsDiffer>false</organismsDiffer>
    <experiments>3</experiments>
</comment>
<comment type="interaction">
    <interactant intactId="EBI-781551">
        <id>Q9Y282</id>
    </interactant>
    <interactant intactId="EBI-12266234">
        <id>Q8IVJ1</id>
        <label>SLC41A1</label>
    </interactant>
    <organismsDiffer>false</organismsDiffer>
    <experiments>3</experiments>
</comment>
<comment type="interaction">
    <interactant intactId="EBI-781551">
        <id>Q9Y282</id>
    </interactant>
    <interactant intactId="EBI-10290130">
        <id>Q96JW4</id>
        <label>SLC41A2</label>
    </interactant>
    <organismsDiffer>false</organismsDiffer>
    <experiments>3</experiments>
</comment>
<comment type="interaction">
    <interactant intactId="EBI-781551">
        <id>Q9Y282</id>
    </interactant>
    <interactant intactId="EBI-17682849">
        <id>Q6UXD7-2</id>
        <label>SLC49A3</label>
    </interactant>
    <organismsDiffer>false</organismsDiffer>
    <experiments>3</experiments>
</comment>
<comment type="interaction">
    <interactant intactId="EBI-781551">
        <id>Q9Y282</id>
    </interactant>
    <interactant intactId="EBI-10226799">
        <id>Q0VAQ4</id>
        <label>SMAGP</label>
    </interactant>
    <organismsDiffer>false</organismsDiffer>
    <experiments>3</experiments>
</comment>
<comment type="interaction">
    <interactant intactId="EBI-781551">
        <id>Q9Y282</id>
    </interactant>
    <interactant intactId="EBI-8640191">
        <id>Q9NRQ5</id>
        <label>SMCO4</label>
    </interactant>
    <organismsDiffer>false</organismsDiffer>
    <experiments>3</experiments>
</comment>
<comment type="interaction">
    <interactant intactId="EBI-781551">
        <id>Q9Y282</id>
    </interactant>
    <interactant intactId="EBI-12188413">
        <id>B2RUZ4</id>
        <label>SMIM1</label>
    </interactant>
    <organismsDiffer>false</organismsDiffer>
    <experiments>3</experiments>
</comment>
<comment type="interaction">
    <interactant intactId="EBI-781551">
        <id>Q9Y282</id>
    </interactant>
    <interactant intactId="EBI-741850">
        <id>Q9BZL3</id>
        <label>SMIM3</label>
    </interactant>
    <organismsDiffer>false</organismsDiffer>
    <experiments>3</experiments>
</comment>
<comment type="interaction">
    <interactant intactId="EBI-781551">
        <id>Q9Y282</id>
    </interactant>
    <interactant intactId="EBI-11957067">
        <id>Q6UX34</id>
        <label>SNORC</label>
    </interactant>
    <organismsDiffer>false</organismsDiffer>
    <experiments>3</experiments>
</comment>
<comment type="interaction">
    <interactant intactId="EBI-781551">
        <id>Q9Y282</id>
    </interactant>
    <interactant intactId="EBI-10049055">
        <id>P16150</id>
        <label>SPN</label>
    </interactant>
    <organismsDiffer>false</organismsDiffer>
    <experiments>3</experiments>
</comment>
<comment type="interaction">
    <interactant intactId="EBI-781551">
        <id>Q9Y282</id>
    </interactant>
    <interactant intactId="EBI-738687">
        <id>P02808</id>
        <label>STATH</label>
    </interactant>
    <organismsDiffer>false</organismsDiffer>
    <experiments>3</experiments>
</comment>
<comment type="interaction">
    <interactant intactId="EBI-781551">
        <id>Q9Y282</id>
    </interactant>
    <interactant intactId="EBI-2691717">
        <id>Q86Y82</id>
        <label>STX12</label>
    </interactant>
    <organismsDiffer>false</organismsDiffer>
    <experiments>3</experiments>
</comment>
<comment type="interaction">
    <interactant intactId="EBI-781551">
        <id>Q9Y282</id>
    </interactant>
    <interactant intactId="EBI-9071709">
        <id>P61266</id>
        <label>STX1B</label>
    </interactant>
    <organismsDiffer>false</organismsDiffer>
    <experiments>3</experiments>
</comment>
<comment type="interaction">
    <interactant intactId="EBI-781551">
        <id>Q9Y282</id>
    </interactant>
    <interactant intactId="EBI-1394295">
        <id>Q13277</id>
        <label>STX3</label>
    </interactant>
    <organismsDiffer>false</organismsDiffer>
    <experiments>3</experiments>
</comment>
<comment type="interaction">
    <interactant intactId="EBI-781551">
        <id>Q9Y282</id>
    </interactant>
    <interactant intactId="EBI-727240">
        <id>Q9UNK0</id>
        <label>STX8</label>
    </interactant>
    <organismsDiffer>false</organismsDiffer>
    <experiments>3</experiments>
</comment>
<comment type="interaction">
    <interactant intactId="EBI-781551">
        <id>Q9Y282</id>
    </interactant>
    <interactant intactId="EBI-12187159">
        <id>O43759-2</id>
        <label>SYNGR1</label>
    </interactant>
    <organismsDiffer>false</organismsDiffer>
    <experiments>3</experiments>
</comment>
<comment type="interaction">
    <interactant intactId="EBI-781551">
        <id>Q9Y282</id>
    </interactant>
    <interactant intactId="EBI-1049004">
        <id>P57105</id>
        <label>SYNJ2BP</label>
    </interactant>
    <organismsDiffer>false</organismsDiffer>
    <experiments>3</experiments>
</comment>
<comment type="interaction">
    <interactant intactId="EBI-781551">
        <id>Q9Y282</id>
    </interactant>
    <interactant intactId="EBI-13075176">
        <id>Q8N2H4</id>
        <label>SYS1</label>
    </interactant>
    <organismsDiffer>false</organismsDiffer>
    <experiments>3</experiments>
</comment>
<comment type="interaction">
    <interactant intactId="EBI-781551">
        <id>Q9Y282</id>
    </interactant>
    <interactant intactId="EBI-747259">
        <id>Q03518</id>
        <label>TAP1</label>
    </interactant>
    <organismsDiffer>false</organismsDiffer>
    <experiments>3</experiments>
</comment>
<comment type="interaction">
    <interactant intactId="EBI-781551">
        <id>Q9Y282</id>
    </interactant>
    <interactant intactId="EBI-2877718">
        <id>Q9NZ01</id>
        <label>TECR</label>
    </interactant>
    <organismsDiffer>false</organismsDiffer>
    <experiments>3</experiments>
</comment>
<comment type="interaction">
    <interactant intactId="EBI-781551">
        <id>Q9Y282</id>
    </interactant>
    <interactant intactId="EBI-714319">
        <id>P02787</id>
        <label>TF</label>
    </interactant>
    <organismsDiffer>false</organismsDiffer>
    <experiments>3</experiments>
</comment>
<comment type="interaction">
    <interactant intactId="EBI-781551">
        <id>Q9Y282</id>
    </interactant>
    <interactant intactId="EBI-941422">
        <id>P07204</id>
        <label>THBD</label>
    </interactant>
    <organismsDiffer>false</organismsDiffer>
    <experiments>3</experiments>
</comment>
<comment type="interaction">
    <interactant intactId="EBI-781551">
        <id>Q9Y282</id>
    </interactant>
    <interactant intactId="EBI-8650934">
        <id>P48230</id>
        <label>TM4SF4</label>
    </interactant>
    <organismsDiffer>false</organismsDiffer>
    <experiments>3</experiments>
</comment>
<comment type="interaction">
    <interactant intactId="EBI-781551">
        <id>Q9Y282</id>
    </interactant>
    <interactant intactId="EBI-8644968">
        <id>Q9NV29</id>
        <label>TMEM100</label>
    </interactant>
    <organismsDiffer>false</organismsDiffer>
    <experiments>3</experiments>
</comment>
<comment type="interaction">
    <interactant intactId="EBI-781551">
        <id>Q9Y282</id>
    </interactant>
    <interactant intactId="EBI-12845616">
        <id>Q6UX40</id>
        <label>TMEM107</label>
    </interactant>
    <organismsDiffer>false</organismsDiffer>
    <experiments>3</experiments>
</comment>
<comment type="interaction">
    <interactant intactId="EBI-781551">
        <id>Q9Y282</id>
    </interactant>
    <interactant intactId="EBI-1057733">
        <id>Q9BVC6</id>
        <label>TMEM109</label>
    </interactant>
    <organismsDiffer>false</organismsDiffer>
    <experiments>3</experiments>
</comment>
<comment type="interaction">
    <interactant intactId="EBI-781551">
        <id>Q9Y282</id>
    </interactant>
    <interactant intactId="EBI-10171534">
        <id>A0PK00</id>
        <label>TMEM120B</label>
    </interactant>
    <organismsDiffer>false</organismsDiffer>
    <experiments>3</experiments>
</comment>
<comment type="interaction">
    <interactant intactId="EBI-781551">
        <id>Q9Y282</id>
    </interactant>
    <interactant intactId="EBI-10694905">
        <id>Q5BJH2-2</id>
        <label>TMEM128</label>
    </interactant>
    <organismsDiffer>false</organismsDiffer>
    <experiments>3</experiments>
</comment>
<comment type="interaction">
    <interactant intactId="EBI-781551">
        <id>Q9Y282</id>
    </interactant>
    <interactant intactId="EBI-17681263">
        <id>Q96I45</id>
        <label>TMEM141</label>
    </interactant>
    <organismsDiffer>false</organismsDiffer>
    <experiments>3</experiments>
</comment>
<comment type="interaction">
    <interactant intactId="EBI-781551">
        <id>Q9Y282</id>
    </interactant>
    <interactant intactId="EBI-2800360">
        <id>Q9Y6G1</id>
        <label>TMEM14A</label>
    </interactant>
    <organismsDiffer>false</organismsDiffer>
    <experiments>3</experiments>
</comment>
<comment type="interaction">
    <interactant intactId="EBI-781551">
        <id>Q9Y282</id>
    </interactant>
    <interactant intactId="EBI-8638294">
        <id>Q9NUH8</id>
        <label>TMEM14B</label>
    </interactant>
    <organismsDiffer>false</organismsDiffer>
    <experiments>3</experiments>
</comment>
<comment type="interaction">
    <interactant intactId="EBI-781551">
        <id>Q9Y282</id>
    </interactant>
    <interactant intactId="EBI-11724423">
        <id>Q7Z7N9</id>
        <label>TMEM179B</label>
    </interactant>
    <organismsDiffer>false</organismsDiffer>
    <experiments>3</experiments>
</comment>
<comment type="interaction">
    <interactant intactId="EBI-781551">
        <id>Q9Y282</id>
    </interactant>
    <interactant intactId="EBI-12274070">
        <id>Q969S6</id>
        <label>TMEM203</label>
    </interactant>
    <organismsDiffer>false</organismsDiffer>
    <experiments>3</experiments>
</comment>
<comment type="interaction">
    <interactant intactId="EBI-781551">
        <id>Q9Y282</id>
    </interactant>
    <interactant intactId="EBI-10173151">
        <id>A2RU14</id>
        <label>TMEM218</label>
    </interactant>
    <organismsDiffer>false</organismsDiffer>
    <experiments>3</experiments>
</comment>
<comment type="interaction">
    <interactant intactId="EBI-781551">
        <id>Q9Y282</id>
    </interactant>
    <interactant intactId="EBI-347385">
        <id>Q9H0R3</id>
        <label>TMEM222</label>
    </interactant>
    <organismsDiffer>false</organismsDiffer>
    <experiments>3</experiments>
</comment>
<comment type="interaction">
    <interactant intactId="EBI-781551">
        <id>Q9Y282</id>
    </interactant>
    <interactant intactId="EBI-12195227">
        <id>Q8NBD8</id>
        <label>TMEM229B</label>
    </interactant>
    <organismsDiffer>false</organismsDiffer>
    <experiments>3</experiments>
</comment>
<comment type="interaction">
    <interactant intactId="EBI-781551">
        <id>Q9Y282</id>
    </interactant>
    <interactant intactId="EBI-12887458">
        <id>Q9BU79</id>
        <label>TMEM243</label>
    </interactant>
    <organismsDiffer>false</organismsDiffer>
    <experiments>3</experiments>
</comment>
<comment type="interaction">
    <interactant intactId="EBI-781551">
        <id>Q9Y282</id>
    </interactant>
    <interactant intactId="EBI-12038591">
        <id>Q69YG0</id>
        <label>TMEM42</label>
    </interactant>
    <organismsDiffer>false</organismsDiffer>
    <experiments>3</experiments>
</comment>
<comment type="interaction">
    <interactant intactId="EBI-781551">
        <id>Q9Y282</id>
    </interactant>
    <interactant intactId="EBI-2852148">
        <id>Q9H2L4</id>
        <label>TMEM60</label>
    </interactant>
    <organismsDiffer>false</organismsDiffer>
    <experiments>3</experiments>
</comment>
<comment type="interaction">
    <interactant intactId="EBI-781551">
        <id>Q9Y282</id>
    </interactant>
    <interactant intactId="EBI-6656213">
        <id>Q6PI78</id>
        <label>TMEM65</label>
    </interactant>
    <organismsDiffer>false</organismsDiffer>
    <experiments>3</experiments>
</comment>
<comment type="interaction">
    <interactant intactId="EBI-781551">
        <id>Q9Y282</id>
    </interactant>
    <interactant intactId="EBI-12015604">
        <id>Q8N2M4</id>
        <label>TMEM86A</label>
    </interactant>
    <organismsDiffer>false</organismsDiffer>
    <experiments>3</experiments>
</comment>
<comment type="interaction">
    <interactant intactId="EBI-781551">
        <id>Q9Y282</id>
    </interactant>
    <interactant intactId="EBI-2548832">
        <id>Q8N661</id>
        <label>TMEM86B</label>
    </interactant>
    <organismsDiffer>false</organismsDiffer>
    <experiments>3</experiments>
</comment>
<comment type="interaction">
    <interactant intactId="EBI-781551">
        <id>Q9Y282</id>
    </interactant>
    <interactant intactId="EBI-12111910">
        <id>Q5BJF2</id>
        <label>TMEM97</label>
    </interactant>
    <organismsDiffer>false</organismsDiffer>
    <experiments>3</experiments>
</comment>
<comment type="interaction">
    <interactant intactId="EBI-781551">
        <id>Q9Y282</id>
    </interactant>
    <interactant intactId="EBI-2820477">
        <id>Q71RG4</id>
        <label>TMUB2</label>
    </interactant>
    <organismsDiffer>false</organismsDiffer>
    <experiments>3</experiments>
</comment>
<comment type="interaction">
    <interactant intactId="EBI-781551">
        <id>Q9Y282</id>
    </interactant>
    <interactant intactId="EBI-717441">
        <id>O14798</id>
        <label>TNFRSF10C</label>
    </interactant>
    <organismsDiffer>false</organismsDiffer>
    <experiments>3</experiments>
</comment>
<comment type="interaction">
    <interactant intactId="EBI-781551">
        <id>Q9Y282</id>
    </interactant>
    <interactant intactId="EBI-10826510">
        <id>Q96B49</id>
        <label>TOMM6</label>
    </interactant>
    <organismsDiffer>false</organismsDiffer>
    <experiments>3</experiments>
</comment>
<comment type="interaction">
    <interactant intactId="EBI-781551">
        <id>Q9Y282</id>
    </interactant>
    <interactant intactId="EBI-11996766">
        <id>Q8N609</id>
        <label>TRAM1L1</label>
    </interactant>
    <organismsDiffer>false</organismsDiffer>
    <experiments>3</experiments>
</comment>
<comment type="interaction">
    <interactant intactId="EBI-781551">
        <id>Q9Y282</id>
    </interactant>
    <interactant intactId="EBI-742790">
        <id>Q13049</id>
        <label>TRIM32</label>
    </interactant>
    <organismsDiffer>false</organismsDiffer>
    <experiments>3</experiments>
</comment>
<comment type="interaction">
    <interactant intactId="EBI-781551">
        <id>Q9Y282</id>
    </interactant>
    <interactant intactId="EBI-12045841">
        <id>Q86UF1</id>
        <label>TSPAN33</label>
    </interactant>
    <organismsDiffer>false</organismsDiffer>
    <experiments>3</experiments>
</comment>
<comment type="interaction">
    <interactant intactId="EBI-781551">
        <id>Q9Y282</id>
    </interactant>
    <interactant intactId="EBI-12195249">
        <id>Q5TGU0</id>
        <label>TSPO2</label>
    </interactant>
    <organismsDiffer>false</organismsDiffer>
    <experiments>3</experiments>
</comment>
<comment type="interaction">
    <interactant intactId="EBI-781551">
        <id>Q9Y282</id>
    </interactant>
    <interactant intactId="EBI-10243654">
        <id>Q5BVD1</id>
        <label>TTMP</label>
    </interactant>
    <organismsDiffer>false</organismsDiffer>
    <experiments>3</experiments>
</comment>
<comment type="interaction">
    <interactant intactId="EBI-781551">
        <id>Q9Y282</id>
    </interactant>
    <interactant intactId="EBI-11988865">
        <id>A5PKU2</id>
        <label>TUSC5</label>
    </interactant>
    <organismsDiffer>false</organismsDiffer>
    <experiments>3</experiments>
</comment>
<comment type="interaction">
    <interactant intactId="EBI-781551">
        <id>Q9Y282</id>
    </interactant>
    <interactant intactId="EBI-988826">
        <id>Q9Y385</id>
        <label>UBE2J1</label>
    </interactant>
    <organismsDiffer>false</organismsDiffer>
    <experiments>3</experiments>
</comment>
<comment type="interaction">
    <interactant intactId="EBI-781551">
        <id>Q9Y282</id>
    </interactant>
    <interactant intactId="EBI-2819725">
        <id>Q9Y5Z9</id>
        <label>UBIAD1</label>
    </interactant>
    <organismsDiffer>false</organismsDiffer>
    <experiments>3</experiments>
</comment>
<comment type="interaction">
    <interactant intactId="EBI-781551">
        <id>Q9Y282</id>
    </interactant>
    <interactant intactId="EBI-7601760">
        <id>Q53HI1</id>
        <label>UNC50</label>
    </interactant>
    <organismsDiffer>false</organismsDiffer>
    <experiments>3</experiments>
</comment>
<comment type="interaction">
    <interactant intactId="EBI-781551">
        <id>Q9Y282</id>
    </interactant>
    <interactant intactId="EBI-4401271">
        <id>Q9H1C4</id>
        <label>UNC93B1</label>
    </interactant>
    <organismsDiffer>false</organismsDiffer>
    <experiments>3</experiments>
</comment>
<comment type="interaction">
    <interactant intactId="EBI-781551">
        <id>Q9Y282</id>
    </interactant>
    <interactant intactId="EBI-12097582">
        <id>P23763-3</id>
        <label>VAMP1</label>
    </interactant>
    <organismsDiffer>false</organismsDiffer>
    <experiments>3</experiments>
</comment>
<comment type="interaction">
    <interactant intactId="EBI-781551">
        <id>Q9Y282</id>
    </interactant>
    <interactant intactId="EBI-520113">
        <id>P63027</id>
        <label>VAMP2</label>
    </interactant>
    <organismsDiffer>false</organismsDiffer>
    <experiments>3</experiments>
</comment>
<comment type="interaction">
    <interactant intactId="EBI-781551">
        <id>Q9Y282</id>
    </interactant>
    <interactant intactId="EBI-722343">
        <id>Q15836</id>
        <label>VAMP3</label>
    </interactant>
    <organismsDiffer>false</organismsDiffer>
    <experiments>3</experiments>
</comment>
<comment type="interaction">
    <interactant intactId="EBI-781551">
        <id>Q9Y282</id>
    </interactant>
    <interactant intactId="EBI-744953">
        <id>O75379</id>
        <label>VAMP4</label>
    </interactant>
    <organismsDiffer>false</organismsDiffer>
    <experiments>3</experiments>
</comment>
<comment type="interaction">
    <interactant intactId="EBI-781551">
        <id>Q9Y282</id>
    </interactant>
    <interactant intactId="EBI-10191195">
        <id>O95183</id>
        <label>VAMP5</label>
    </interactant>
    <organismsDiffer>false</organismsDiffer>
    <experiments>4</experiments>
</comment>
<comment type="interaction">
    <interactant intactId="EBI-781551">
        <id>Q9Y282</id>
    </interactant>
    <interactant intactId="EBI-6256462">
        <id>Q9BQB6</id>
        <label>VKORC1</label>
    </interactant>
    <organismsDiffer>false</organismsDiffer>
    <experiments>3</experiments>
</comment>
<comment type="interaction">
    <interactant intactId="EBI-781551">
        <id>Q9Y282</id>
    </interactant>
    <interactant intactId="EBI-11337915">
        <id>Q8N0U8</id>
        <label>VKORC1L1</label>
    </interactant>
    <organismsDiffer>false</organismsDiffer>
    <experiments>3</experiments>
</comment>
<comment type="interaction">
    <interactant intactId="EBI-781551">
        <id>Q9Y282</id>
    </interactant>
    <interactant intactId="EBI-2800296">
        <id>Q96GC9</id>
        <label>VMP1</label>
    </interactant>
    <organismsDiffer>false</organismsDiffer>
    <experiments>4</experiments>
</comment>
<comment type="interaction">
    <interactant intactId="EBI-781551">
        <id>Q9Y282</id>
    </interactant>
    <interactant intactId="EBI-12190699">
        <id>Q6UX27-3</id>
        <label>VSTM1</label>
    </interactant>
    <organismsDiffer>false</organismsDiffer>
    <experiments>3</experiments>
</comment>
<comment type="interaction">
    <interactant intactId="EBI-781551">
        <id>Q9Y282</id>
    </interactant>
    <interactant intactId="EBI-723716">
        <id>Q9UEU0</id>
        <label>VTI1B</label>
    </interactant>
    <organismsDiffer>false</organismsDiffer>
    <experiments>3</experiments>
</comment>
<comment type="interaction">
    <interactant intactId="EBI-781551">
        <id>Q9Y282</id>
    </interactant>
    <interactant intactId="EBI-2799703">
        <id>O95070</id>
        <label>YIF1A</label>
    </interactant>
    <organismsDiffer>false</organismsDiffer>
    <experiments>3</experiments>
</comment>
<comment type="interaction">
    <interactant intactId="EBI-781551">
        <id>Q9Y282</id>
    </interactant>
    <interactant intactId="EBI-7850136">
        <id>Q9Y548</id>
        <label>YIPF1</label>
    </interactant>
    <organismsDiffer>false</organismsDiffer>
    <experiments>3</experiments>
</comment>
<comment type="interaction">
    <interactant intactId="EBI-781551">
        <id>Q9Y282</id>
    </interactant>
    <interactant intactId="EBI-751204">
        <id>Q9BWQ6</id>
        <label>YIPF2</label>
    </interactant>
    <organismsDiffer>false</organismsDiffer>
    <experiments>3</experiments>
</comment>
<comment type="interaction">
    <interactant intactId="EBI-781551">
        <id>Q9Y282</id>
    </interactant>
    <interactant intactId="EBI-751253">
        <id>Q9BSR8</id>
        <label>YIPF4</label>
    </interactant>
    <organismsDiffer>false</organismsDiffer>
    <experiments>3</experiments>
</comment>
<comment type="interaction">
    <interactant intactId="EBI-781551">
        <id>Q9Y282</id>
    </interactant>
    <interactant intactId="EBI-751210">
        <id>Q96EC8</id>
        <label>YIPF6</label>
    </interactant>
    <organismsDiffer>false</organismsDiffer>
    <experiments>3</experiments>
</comment>
<comment type="interaction">
    <interactant intactId="EBI-781551">
        <id>Q9Y282</id>
    </interactant>
    <interactant intactId="EBI-12837904">
        <id>Q96MV8</id>
        <label>ZDHHC15</label>
    </interactant>
    <organismsDiffer>false</organismsDiffer>
    <experiments>3</experiments>
</comment>
<comment type="interaction">
    <interactant intactId="EBI-781551">
        <id>Q9Y282</id>
    </interactant>
    <interactant intactId="EBI-2849773">
        <id>Q8IVQ6</id>
        <label>ZDHHC21</label>
    </interactant>
    <organismsDiffer>false</organismsDiffer>
    <experiments>3</experiments>
</comment>
<comment type="interaction">
    <interactant intactId="EBI-781551">
        <id>Q9Y282</id>
    </interactant>
    <interactant intactId="EBI-718439">
        <id>O95159</id>
        <label>ZFPL1</label>
    </interactant>
    <organismsDiffer>false</organismsDiffer>
    <experiments>5</experiments>
</comment>
<comment type="interaction">
    <interactant intactId="EBI-781551">
        <id>Q9Y282</id>
    </interactant>
    <interactant intactId="EBI-2857623">
        <id>Q96FB2</id>
    </interactant>
    <organismsDiffer>false</organismsDiffer>
    <experiments>3</experiments>
</comment>
<comment type="subcellular location">
    <subcellularLocation>
        <location evidence="2">Endoplasmic reticulum-Golgi intermediate compartment membrane</location>
        <topology evidence="2">Multi-pass membrane protein</topology>
    </subcellularLocation>
    <subcellularLocation>
        <location evidence="2">Golgi apparatus</location>
        <location evidence="2">cis-Golgi network membrane</location>
        <topology evidence="2">Multi-pass membrane protein</topology>
    </subcellularLocation>
    <subcellularLocation>
        <location evidence="2">Endoplasmic reticulum membrane</location>
        <topology evidence="2">Multi-pass membrane protein</topology>
    </subcellularLocation>
    <text>Cycles between the endoplasmic reticulum and the Golgi.</text>
</comment>
<comment type="alternative products">
    <event type="alternative splicing"/>
    <isoform>
        <id>Q9Y282-1</id>
        <name>1</name>
        <sequence type="displayed"/>
    </isoform>
    <isoform>
        <id>Q9Y282-2</id>
        <name>2</name>
        <sequence type="described" ref="VSP_008652 VSP_008653"/>
    </isoform>
    <isoform>
        <id>Q9Y282-3</id>
        <name>3</name>
        <sequence type="described" ref="VSP_019208"/>
    </isoform>
</comment>
<comment type="similarity">
    <text evidence="8">Belongs to the ERGIC family.</text>
</comment>
<comment type="sequence caution" evidence="8">
    <conflict type="erroneous initiation">
        <sequence resource="EMBL-CDS" id="AAF71038"/>
    </conflict>
</comment>
<comment type="sequence caution" evidence="8">
    <conflict type="erroneous initiation">
        <sequence resource="EMBL-CDS" id="AAG48265"/>
    </conflict>
</comment>
<sequence>MEALGKLKQFDAYPKTLEDFRVKTCGGATVTIVSGLLMLLLFLSELQYYLTTEVHPELYVDKSRGDKLKINIDVLFPHMPCAYLSIDAMDVAGEQQLDVEHNLFKQRLDKDGIPVSSEAERHELGKVEVTVFDPDSLDPDRCESCYGAEAEDIKCCNTCEDVREAYRRRGWAFKNPDTIEQCRREGFSQKMQEQKNEGCQVYGFLEVNKVAGNFHFAPGKSFQQSHVHVHDLQSFGLDNINMTHYIQHLSFGEDYPGIVNPLDHTNVTAPQASMMFQYFVKVVPTVYMKVDGEVLRTNQFSVTRHEKVANGLLGDQGLPGVFVLYELSPMMVKLTEKHRSFTHFLTGVCAIIGGMFTVAGLIDSLIYHSARAIQKKIDLGKTT</sequence>
<protein>
    <recommendedName>
        <fullName>Endoplasmic reticulum-Golgi intermediate compartment protein 3</fullName>
    </recommendedName>
    <alternativeName>
        <fullName>Serologically defined breast cancer antigen NY-BR-84</fullName>
    </alternativeName>
</protein>
<dbReference type="EMBL" id="AF308298">
    <property type="protein sequence ID" value="AAG48265.1"/>
    <property type="status" value="ALT_INIT"/>
    <property type="molecule type" value="mRNA"/>
</dbReference>
<dbReference type="EMBL" id="AF151812">
    <property type="protein sequence ID" value="AAD34049.1"/>
    <property type="molecule type" value="mRNA"/>
</dbReference>
<dbReference type="EMBL" id="AK074550">
    <property type="protein sequence ID" value="BAC11054.1"/>
    <property type="molecule type" value="mRNA"/>
</dbReference>
<dbReference type="EMBL" id="AF077030">
    <property type="protein sequence ID" value="AAD27763.1"/>
    <property type="molecule type" value="mRNA"/>
</dbReference>
<dbReference type="EMBL" id="AL121586">
    <property type="protein sequence ID" value="CAB89412.1"/>
    <property type="molecule type" value="Genomic_DNA"/>
</dbReference>
<dbReference type="EMBL" id="AL121586">
    <property type="protein sequence ID" value="CAI42842.1"/>
    <property type="molecule type" value="Genomic_DNA"/>
</dbReference>
<dbReference type="EMBL" id="BC009765">
    <property type="protein sequence ID" value="AAH09765.1"/>
    <property type="molecule type" value="mRNA"/>
</dbReference>
<dbReference type="EMBL" id="BC014014">
    <property type="protein sequence ID" value="AAH14014.1"/>
    <property type="molecule type" value="mRNA"/>
</dbReference>
<dbReference type="EMBL" id="AF116614">
    <property type="protein sequence ID" value="AAF71038.1"/>
    <property type="status" value="ALT_INIT"/>
    <property type="molecule type" value="mRNA"/>
</dbReference>
<dbReference type="CCDS" id="CCDS13257.1">
    <molecule id="Q9Y282-1"/>
</dbReference>
<dbReference type="CCDS" id="CCDS13258.1">
    <molecule id="Q9Y282-3"/>
</dbReference>
<dbReference type="RefSeq" id="NP_057050.1">
    <molecule id="Q9Y282-1"/>
    <property type="nucleotide sequence ID" value="NM_015966.3"/>
</dbReference>
<dbReference type="RefSeq" id="NP_938408.1">
    <molecule id="Q9Y282-3"/>
    <property type="nucleotide sequence ID" value="NM_198398.2"/>
</dbReference>
<dbReference type="SMR" id="Q9Y282"/>
<dbReference type="BioGRID" id="119638">
    <property type="interactions" value="381"/>
</dbReference>
<dbReference type="ComplexPortal" id="CPX-7221">
    <property type="entry name" value="ERGIC2-ERGIC3 retrograde receptor complex"/>
</dbReference>
<dbReference type="FunCoup" id="Q9Y282">
    <property type="interactions" value="1866"/>
</dbReference>
<dbReference type="IntAct" id="Q9Y282">
    <property type="interactions" value="283"/>
</dbReference>
<dbReference type="MINT" id="Q9Y282"/>
<dbReference type="STRING" id="9606.ENSP00000349970"/>
<dbReference type="GlyCosmos" id="Q9Y282">
    <property type="glycosylation" value="3 sites, 1 glycan"/>
</dbReference>
<dbReference type="GlyGen" id="Q9Y282">
    <property type="glycosylation" value="5 sites, 3 O-linked glycans (3 sites)"/>
</dbReference>
<dbReference type="iPTMnet" id="Q9Y282"/>
<dbReference type="PhosphoSitePlus" id="Q9Y282"/>
<dbReference type="SwissPalm" id="Q9Y282"/>
<dbReference type="BioMuta" id="ERGIC3"/>
<dbReference type="DMDM" id="37999823"/>
<dbReference type="jPOST" id="Q9Y282"/>
<dbReference type="MassIVE" id="Q9Y282"/>
<dbReference type="PaxDb" id="9606-ENSP00000349970"/>
<dbReference type="PeptideAtlas" id="Q9Y282"/>
<dbReference type="ProteomicsDB" id="85687">
    <molecule id="Q9Y282-1"/>
</dbReference>
<dbReference type="ProteomicsDB" id="85688">
    <molecule id="Q9Y282-2"/>
</dbReference>
<dbReference type="ProteomicsDB" id="85689">
    <molecule id="Q9Y282-3"/>
</dbReference>
<dbReference type="Pumba" id="Q9Y282"/>
<dbReference type="Antibodypedia" id="3001">
    <property type="antibodies" value="246 antibodies from 31 providers"/>
</dbReference>
<dbReference type="DNASU" id="51614"/>
<dbReference type="Ensembl" id="ENST00000348547.7">
    <molecule id="Q9Y282-1"/>
    <property type="protein sequence ID" value="ENSP00000341358.2"/>
    <property type="gene ID" value="ENSG00000125991.21"/>
</dbReference>
<dbReference type="Ensembl" id="ENST00000357394.8">
    <molecule id="Q9Y282-3"/>
    <property type="protein sequence ID" value="ENSP00000349970.4"/>
    <property type="gene ID" value="ENSG00000125991.21"/>
</dbReference>
<dbReference type="GeneID" id="51614"/>
<dbReference type="KEGG" id="hsa:51614"/>
<dbReference type="MANE-Select" id="ENST00000348547.7">
    <property type="protein sequence ID" value="ENSP00000341358.2"/>
    <property type="RefSeq nucleotide sequence ID" value="NM_015966.3"/>
    <property type="RefSeq protein sequence ID" value="NP_057050.1"/>
</dbReference>
<dbReference type="UCSC" id="uc002xcs.4">
    <molecule id="Q9Y282-1"/>
    <property type="organism name" value="human"/>
</dbReference>
<dbReference type="AGR" id="HGNC:15927"/>
<dbReference type="CTD" id="51614"/>
<dbReference type="DisGeNET" id="51614"/>
<dbReference type="GeneCards" id="ERGIC3"/>
<dbReference type="HGNC" id="HGNC:15927">
    <property type="gene designation" value="ERGIC3"/>
</dbReference>
<dbReference type="HPA" id="ENSG00000125991">
    <property type="expression patterns" value="Low tissue specificity"/>
</dbReference>
<dbReference type="neXtProt" id="NX_Q9Y282"/>
<dbReference type="OpenTargets" id="ENSG00000125991"/>
<dbReference type="PharmGKB" id="PA38050"/>
<dbReference type="VEuPathDB" id="HostDB:ENSG00000125991"/>
<dbReference type="eggNOG" id="KOG2667">
    <property type="taxonomic scope" value="Eukaryota"/>
</dbReference>
<dbReference type="GeneTree" id="ENSGT00530000063113"/>
<dbReference type="InParanoid" id="Q9Y282"/>
<dbReference type="OMA" id="QRHEGCR"/>
<dbReference type="OrthoDB" id="270930at2759"/>
<dbReference type="PAN-GO" id="Q9Y282">
    <property type="GO annotations" value="7 GO annotations based on evolutionary models"/>
</dbReference>
<dbReference type="PhylomeDB" id="Q9Y282"/>
<dbReference type="TreeFam" id="TF300739"/>
<dbReference type="PathwayCommons" id="Q9Y282"/>
<dbReference type="SignaLink" id="Q9Y282"/>
<dbReference type="SIGNOR" id="Q9Y282"/>
<dbReference type="BioGRID-ORCS" id="51614">
    <property type="hits" value="36 hits in 1157 CRISPR screens"/>
</dbReference>
<dbReference type="ChiTaRS" id="ERGIC3">
    <property type="organism name" value="human"/>
</dbReference>
<dbReference type="GeneWiki" id="ERGIC3"/>
<dbReference type="GenomeRNAi" id="51614"/>
<dbReference type="Pharos" id="Q9Y282">
    <property type="development level" value="Tbio"/>
</dbReference>
<dbReference type="PRO" id="PR:Q9Y282"/>
<dbReference type="Proteomes" id="UP000005640">
    <property type="component" value="Chromosome 20"/>
</dbReference>
<dbReference type="RNAct" id="Q9Y282">
    <property type="molecule type" value="protein"/>
</dbReference>
<dbReference type="Bgee" id="ENSG00000125991">
    <property type="expression patterns" value="Expressed in right uterine tube and 207 other cell types or tissues"/>
</dbReference>
<dbReference type="ExpressionAtlas" id="Q9Y282">
    <property type="expression patterns" value="baseline and differential"/>
</dbReference>
<dbReference type="GO" id="GO:0030134">
    <property type="term" value="C:COPII-coated ER to Golgi transport vesicle"/>
    <property type="evidence" value="ECO:0000318"/>
    <property type="project" value="GO_Central"/>
</dbReference>
<dbReference type="GO" id="GO:0005783">
    <property type="term" value="C:endoplasmic reticulum"/>
    <property type="evidence" value="ECO:0000318"/>
    <property type="project" value="GO_Central"/>
</dbReference>
<dbReference type="GO" id="GO:0005789">
    <property type="term" value="C:endoplasmic reticulum membrane"/>
    <property type="evidence" value="ECO:0000318"/>
    <property type="project" value="GO_Central"/>
</dbReference>
<dbReference type="GO" id="GO:0033116">
    <property type="term" value="C:endoplasmic reticulum-Golgi intermediate compartment membrane"/>
    <property type="evidence" value="ECO:0007669"/>
    <property type="project" value="UniProtKB-SubCell"/>
</dbReference>
<dbReference type="GO" id="GO:0000139">
    <property type="term" value="C:Golgi membrane"/>
    <property type="evidence" value="ECO:0000318"/>
    <property type="project" value="GO_Central"/>
</dbReference>
<dbReference type="GO" id="GO:0016020">
    <property type="term" value="C:membrane"/>
    <property type="evidence" value="ECO:0007005"/>
    <property type="project" value="UniProtKB"/>
</dbReference>
<dbReference type="GO" id="GO:0061852">
    <property type="term" value="C:retrograde transporter complex, Golgi to ER"/>
    <property type="evidence" value="ECO:0000353"/>
    <property type="project" value="ComplexPortal"/>
</dbReference>
<dbReference type="GO" id="GO:1990351">
    <property type="term" value="C:transporter complex"/>
    <property type="evidence" value="ECO:0000353"/>
    <property type="project" value="ComplexPortal"/>
</dbReference>
<dbReference type="GO" id="GO:0006888">
    <property type="term" value="P:endoplasmic reticulum to Golgi vesicle-mediated transport"/>
    <property type="evidence" value="ECO:0000314"/>
    <property type="project" value="ComplexPortal"/>
</dbReference>
<dbReference type="GO" id="GO:0090316">
    <property type="term" value="P:positive regulation of intracellular protein transport"/>
    <property type="evidence" value="ECO:0000315"/>
    <property type="project" value="UniProtKB"/>
</dbReference>
<dbReference type="GO" id="GO:0006890">
    <property type="term" value="P:retrograde vesicle-mediated transport, Golgi to endoplasmic reticulum"/>
    <property type="evidence" value="ECO:0000318"/>
    <property type="project" value="GO_Central"/>
</dbReference>
<dbReference type="InterPro" id="IPR045888">
    <property type="entry name" value="Erv"/>
</dbReference>
<dbReference type="InterPro" id="IPR012936">
    <property type="entry name" value="Erv_C"/>
</dbReference>
<dbReference type="InterPro" id="IPR039542">
    <property type="entry name" value="Erv_N"/>
</dbReference>
<dbReference type="PANTHER" id="PTHR10984">
    <property type="entry name" value="ENDOPLASMIC RETICULUM-GOLGI INTERMEDIATE COMPARTMENT PROTEIN"/>
    <property type="match status" value="1"/>
</dbReference>
<dbReference type="PANTHER" id="PTHR10984:SF25">
    <property type="entry name" value="ENDOPLASMIC RETICULUM-GOLGI INTERMEDIATE COMPARTMENT PROTEIN 3"/>
    <property type="match status" value="1"/>
</dbReference>
<dbReference type="Pfam" id="PF07970">
    <property type="entry name" value="COPIIcoated_ERV"/>
    <property type="match status" value="1"/>
</dbReference>
<dbReference type="Pfam" id="PF13850">
    <property type="entry name" value="ERGIC_N"/>
    <property type="match status" value="1"/>
</dbReference>
<gene>
    <name type="primary">ERGIC3</name>
    <name type="synonym">C20orf47</name>
    <name type="synonym">ERV46</name>
    <name type="synonym">SDBCAG84</name>
    <name type="ORF">CGI-54</name>
    <name type="ORF">PRO0989</name>
</gene>
<reference key="1">
    <citation type="journal article" date="2001" name="Cancer Immun.">
        <title>Humoral immunity to human breast cancer: antigen definition and quantitative analysis of mRNA expression.</title>
        <authorList>
            <person name="Scanlan M.J."/>
            <person name="Gout I."/>
            <person name="Gordon C.M."/>
            <person name="Williamson B."/>
            <person name="Stockert E."/>
            <person name="Gure A.O."/>
            <person name="Jaeger D."/>
            <person name="Chen Y.-T."/>
            <person name="Mackay A."/>
            <person name="O'Hare M.J."/>
            <person name="Old L.J."/>
        </authorList>
    </citation>
    <scope>NUCLEOTIDE SEQUENCE [MRNA] (ISOFORM 2)</scope>
    <source>
        <tissue>Mammary gland</tissue>
    </source>
</reference>
<reference key="2">
    <citation type="journal article" date="2000" name="Genome Res.">
        <title>Identification of novel human genes evolutionarily conserved in Caenorhabditis elegans by comparative proteomics.</title>
        <authorList>
            <person name="Lai C.-H."/>
            <person name="Chou C.-Y."/>
            <person name="Ch'ang L.-Y."/>
            <person name="Liu C.-S."/>
            <person name="Lin W.-C."/>
        </authorList>
    </citation>
    <scope>NUCLEOTIDE SEQUENCE [LARGE SCALE MRNA] (ISOFORM 1)</scope>
</reference>
<reference key="3">
    <citation type="journal article" date="2004" name="Nat. Genet.">
        <title>Complete sequencing and characterization of 21,243 full-length human cDNAs.</title>
        <authorList>
            <person name="Ota T."/>
            <person name="Suzuki Y."/>
            <person name="Nishikawa T."/>
            <person name="Otsuki T."/>
            <person name="Sugiyama T."/>
            <person name="Irie R."/>
            <person name="Wakamatsu A."/>
            <person name="Hayashi K."/>
            <person name="Sato H."/>
            <person name="Nagai K."/>
            <person name="Kimura K."/>
            <person name="Makita H."/>
            <person name="Sekine M."/>
            <person name="Obayashi M."/>
            <person name="Nishi T."/>
            <person name="Shibahara T."/>
            <person name="Tanaka T."/>
            <person name="Ishii S."/>
            <person name="Yamamoto J."/>
            <person name="Saito K."/>
            <person name="Kawai Y."/>
            <person name="Isono Y."/>
            <person name="Nakamura Y."/>
            <person name="Nagahari K."/>
            <person name="Murakami K."/>
            <person name="Yasuda T."/>
            <person name="Iwayanagi T."/>
            <person name="Wagatsuma M."/>
            <person name="Shiratori A."/>
            <person name="Sudo H."/>
            <person name="Hosoiri T."/>
            <person name="Kaku Y."/>
            <person name="Kodaira H."/>
            <person name="Kondo H."/>
            <person name="Sugawara M."/>
            <person name="Takahashi M."/>
            <person name="Kanda K."/>
            <person name="Yokoi T."/>
            <person name="Furuya T."/>
            <person name="Kikkawa E."/>
            <person name="Omura Y."/>
            <person name="Abe K."/>
            <person name="Kamihara K."/>
            <person name="Katsuta N."/>
            <person name="Sato K."/>
            <person name="Tanikawa M."/>
            <person name="Yamazaki M."/>
            <person name="Ninomiya K."/>
            <person name="Ishibashi T."/>
            <person name="Yamashita H."/>
            <person name="Murakawa K."/>
            <person name="Fujimori K."/>
            <person name="Tanai H."/>
            <person name="Kimata M."/>
            <person name="Watanabe M."/>
            <person name="Hiraoka S."/>
            <person name="Chiba Y."/>
            <person name="Ishida S."/>
            <person name="Ono Y."/>
            <person name="Takiguchi S."/>
            <person name="Watanabe S."/>
            <person name="Yosida M."/>
            <person name="Hotuta T."/>
            <person name="Kusano J."/>
            <person name="Kanehori K."/>
            <person name="Takahashi-Fujii A."/>
            <person name="Hara H."/>
            <person name="Tanase T.-O."/>
            <person name="Nomura Y."/>
            <person name="Togiya S."/>
            <person name="Komai F."/>
            <person name="Hara R."/>
            <person name="Takeuchi K."/>
            <person name="Arita M."/>
            <person name="Imose N."/>
            <person name="Musashino K."/>
            <person name="Yuuki H."/>
            <person name="Oshima A."/>
            <person name="Sasaki N."/>
            <person name="Aotsuka S."/>
            <person name="Yoshikawa Y."/>
            <person name="Matsunawa H."/>
            <person name="Ichihara T."/>
            <person name="Shiohata N."/>
            <person name="Sano S."/>
            <person name="Moriya S."/>
            <person name="Momiyama H."/>
            <person name="Satoh N."/>
            <person name="Takami S."/>
            <person name="Terashima Y."/>
            <person name="Suzuki O."/>
            <person name="Nakagawa S."/>
            <person name="Senoh A."/>
            <person name="Mizoguchi H."/>
            <person name="Goto Y."/>
            <person name="Shimizu F."/>
            <person name="Wakebe H."/>
            <person name="Hishigaki H."/>
            <person name="Watanabe T."/>
            <person name="Sugiyama A."/>
            <person name="Takemoto M."/>
            <person name="Kawakami B."/>
            <person name="Yamazaki M."/>
            <person name="Watanabe K."/>
            <person name="Kumagai A."/>
            <person name="Itakura S."/>
            <person name="Fukuzumi Y."/>
            <person name="Fujimori Y."/>
            <person name="Komiyama M."/>
            <person name="Tashiro H."/>
            <person name="Tanigami A."/>
            <person name="Fujiwara T."/>
            <person name="Ono T."/>
            <person name="Yamada K."/>
            <person name="Fujii Y."/>
            <person name="Ozaki K."/>
            <person name="Hirao M."/>
            <person name="Ohmori Y."/>
            <person name="Kawabata A."/>
            <person name="Hikiji T."/>
            <person name="Kobatake N."/>
            <person name="Inagaki H."/>
            <person name="Ikema Y."/>
            <person name="Okamoto S."/>
            <person name="Okitani R."/>
            <person name="Kawakami T."/>
            <person name="Noguchi S."/>
            <person name="Itoh T."/>
            <person name="Shigeta K."/>
            <person name="Senba T."/>
            <person name="Matsumura K."/>
            <person name="Nakajima Y."/>
            <person name="Mizuno T."/>
            <person name="Morinaga M."/>
            <person name="Sasaki M."/>
            <person name="Togashi T."/>
            <person name="Oyama M."/>
            <person name="Hata H."/>
            <person name="Watanabe M."/>
            <person name="Komatsu T."/>
            <person name="Mizushima-Sugano J."/>
            <person name="Satoh T."/>
            <person name="Shirai Y."/>
            <person name="Takahashi Y."/>
            <person name="Nakagawa K."/>
            <person name="Okumura K."/>
            <person name="Nagase T."/>
            <person name="Nomura N."/>
            <person name="Kikuchi H."/>
            <person name="Masuho Y."/>
            <person name="Yamashita R."/>
            <person name="Nakai K."/>
            <person name="Yada T."/>
            <person name="Nakamura Y."/>
            <person name="Ohara O."/>
            <person name="Isogai T."/>
            <person name="Sugano S."/>
        </authorList>
    </citation>
    <scope>NUCLEOTIDE SEQUENCE [LARGE SCALE MRNA] (ISOFORM 3)</scope>
    <source>
        <tissue>Embryo</tissue>
    </source>
</reference>
<reference key="4">
    <citation type="submission" date="1998-07" db="EMBL/GenBank/DDBJ databases">
        <title>Human hypothetical 43.2 Kd protein.</title>
        <authorList>
            <person name="Zhang J."/>
            <person name="Liu T."/>
            <person name="Ye M."/>
            <person name="Zhang Q."/>
            <person name="Fu G."/>
            <person name="Zhou J."/>
            <person name="Wu J."/>
            <person name="Shen Y."/>
            <person name="Yu M."/>
            <person name="Chen S."/>
            <person name="Mao M."/>
            <person name="Chen Z."/>
        </authorList>
    </citation>
    <scope>NUCLEOTIDE SEQUENCE [LARGE SCALE MRNA] (ISOFORM 1)</scope>
</reference>
<reference key="5">
    <citation type="journal article" date="2001" name="Nature">
        <title>The DNA sequence and comparative analysis of human chromosome 20.</title>
        <authorList>
            <person name="Deloukas P."/>
            <person name="Matthews L.H."/>
            <person name="Ashurst J.L."/>
            <person name="Burton J."/>
            <person name="Gilbert J.G.R."/>
            <person name="Jones M."/>
            <person name="Stavrides G."/>
            <person name="Almeida J.P."/>
            <person name="Babbage A.K."/>
            <person name="Bagguley C.L."/>
            <person name="Bailey J."/>
            <person name="Barlow K.F."/>
            <person name="Bates K.N."/>
            <person name="Beard L.M."/>
            <person name="Beare D.M."/>
            <person name="Beasley O.P."/>
            <person name="Bird C.P."/>
            <person name="Blakey S.E."/>
            <person name="Bridgeman A.M."/>
            <person name="Brown A.J."/>
            <person name="Buck D."/>
            <person name="Burrill W.D."/>
            <person name="Butler A.P."/>
            <person name="Carder C."/>
            <person name="Carter N.P."/>
            <person name="Chapman J.C."/>
            <person name="Clamp M."/>
            <person name="Clark G."/>
            <person name="Clark L.N."/>
            <person name="Clark S.Y."/>
            <person name="Clee C.M."/>
            <person name="Clegg S."/>
            <person name="Cobley V.E."/>
            <person name="Collier R.E."/>
            <person name="Connor R.E."/>
            <person name="Corby N.R."/>
            <person name="Coulson A."/>
            <person name="Coville G.J."/>
            <person name="Deadman R."/>
            <person name="Dhami P.D."/>
            <person name="Dunn M."/>
            <person name="Ellington A.G."/>
            <person name="Frankland J.A."/>
            <person name="Fraser A."/>
            <person name="French L."/>
            <person name="Garner P."/>
            <person name="Grafham D.V."/>
            <person name="Griffiths C."/>
            <person name="Griffiths M.N.D."/>
            <person name="Gwilliam R."/>
            <person name="Hall R.E."/>
            <person name="Hammond S."/>
            <person name="Harley J.L."/>
            <person name="Heath P.D."/>
            <person name="Ho S."/>
            <person name="Holden J.L."/>
            <person name="Howden P.J."/>
            <person name="Huckle E."/>
            <person name="Hunt A.R."/>
            <person name="Hunt S.E."/>
            <person name="Jekosch K."/>
            <person name="Johnson C.M."/>
            <person name="Johnson D."/>
            <person name="Kay M.P."/>
            <person name="Kimberley A.M."/>
            <person name="King A."/>
            <person name="Knights A."/>
            <person name="Laird G.K."/>
            <person name="Lawlor S."/>
            <person name="Lehvaeslaiho M.H."/>
            <person name="Leversha M.A."/>
            <person name="Lloyd C."/>
            <person name="Lloyd D.M."/>
            <person name="Lovell J.D."/>
            <person name="Marsh V.L."/>
            <person name="Martin S.L."/>
            <person name="McConnachie L.J."/>
            <person name="McLay K."/>
            <person name="McMurray A.A."/>
            <person name="Milne S.A."/>
            <person name="Mistry D."/>
            <person name="Moore M.J.F."/>
            <person name="Mullikin J.C."/>
            <person name="Nickerson T."/>
            <person name="Oliver K."/>
            <person name="Parker A."/>
            <person name="Patel R."/>
            <person name="Pearce T.A.V."/>
            <person name="Peck A.I."/>
            <person name="Phillimore B.J.C.T."/>
            <person name="Prathalingam S.R."/>
            <person name="Plumb R.W."/>
            <person name="Ramsay H."/>
            <person name="Rice C.M."/>
            <person name="Ross M.T."/>
            <person name="Scott C.E."/>
            <person name="Sehra H.K."/>
            <person name="Shownkeen R."/>
            <person name="Sims S."/>
            <person name="Skuce C.D."/>
            <person name="Smith M.L."/>
            <person name="Soderlund C."/>
            <person name="Steward C.A."/>
            <person name="Sulston J.E."/>
            <person name="Swann R.M."/>
            <person name="Sycamore N."/>
            <person name="Taylor R."/>
            <person name="Tee L."/>
            <person name="Thomas D.W."/>
            <person name="Thorpe A."/>
            <person name="Tracey A."/>
            <person name="Tromans A.C."/>
            <person name="Vaudin M."/>
            <person name="Wall M."/>
            <person name="Wallis J.M."/>
            <person name="Whitehead S.L."/>
            <person name="Whittaker P."/>
            <person name="Willey D.L."/>
            <person name="Williams L."/>
            <person name="Williams S.A."/>
            <person name="Wilming L."/>
            <person name="Wray P.W."/>
            <person name="Hubbard T."/>
            <person name="Durbin R.M."/>
            <person name="Bentley D.R."/>
            <person name="Beck S."/>
            <person name="Rogers J."/>
        </authorList>
    </citation>
    <scope>NUCLEOTIDE SEQUENCE [LARGE SCALE GENOMIC DNA]</scope>
</reference>
<reference key="6">
    <citation type="journal article" date="2004" name="Genome Res.">
        <title>The status, quality, and expansion of the NIH full-length cDNA project: the Mammalian Gene Collection (MGC).</title>
        <authorList>
            <consortium name="The MGC Project Team"/>
        </authorList>
    </citation>
    <scope>NUCLEOTIDE SEQUENCE [LARGE SCALE MRNA] (ISOFORM 1)</scope>
    <source>
        <tissue>Brain</tissue>
        <tissue>Skin</tissue>
    </source>
</reference>
<reference key="7">
    <citation type="submission" date="1998-12" db="EMBL/GenBank/DDBJ databases">
        <title>Functional prediction of the coding sequences of 121 new genes deduced by analysis of cDNA clones from human fetal liver.</title>
        <authorList>
            <person name="Zhang C."/>
            <person name="Yu Y."/>
            <person name="Zhang S."/>
            <person name="Wei H."/>
            <person name="Zhou G."/>
            <person name="Ouyang S."/>
            <person name="Luo L."/>
            <person name="Bi J."/>
            <person name="Liu M."/>
            <person name="He F."/>
        </authorList>
    </citation>
    <scope>NUCLEOTIDE SEQUENCE [LARGE SCALE MRNA] OF 11-383 (ISOFORM 1)</scope>
    <source>
        <tissue>Fetal liver</tissue>
    </source>
</reference>
<reference key="8">
    <citation type="journal article" date="2004" name="J. Biol. Chem.">
        <title>Proteomics of endoplasmic reticulum-Golgi intermediate compartment (ERGIC) membranes from brefeldin A-treated HepG2 cells identifies ERGIC-32, a new cycling protein that interacts with human Erv46.</title>
        <authorList>
            <person name="Breuza L."/>
            <person name="Halbeisen R."/>
            <person name="Jenoe P."/>
            <person name="Otte S."/>
            <person name="Barlowe C."/>
            <person name="Hong W."/>
            <person name="Hauri H.-P."/>
        </authorList>
    </citation>
    <scope>SUBCELLULAR LOCATION</scope>
    <scope>INTERACTION WITH ERGIC1</scope>
</reference>
<reference key="9">
    <citation type="journal article" date="2009" name="J. Proteome Res.">
        <title>Glycoproteomics analysis of human liver tissue by combination of multiple enzyme digestion and hydrazide chemistry.</title>
        <authorList>
            <person name="Chen R."/>
            <person name="Jiang X."/>
            <person name="Sun D."/>
            <person name="Han G."/>
            <person name="Wang F."/>
            <person name="Ye M."/>
            <person name="Wang L."/>
            <person name="Zou H."/>
        </authorList>
    </citation>
    <scope>GLYCOSYLATION [LARGE SCALE ANALYSIS] AT ASN-241</scope>
    <source>
        <tissue>Liver</tissue>
    </source>
</reference>
<reference key="10">
    <citation type="journal article" date="2011" name="BMC Syst. Biol.">
        <title>Initial characterization of the human central proteome.</title>
        <authorList>
            <person name="Burkard T.R."/>
            <person name="Planyavsky M."/>
            <person name="Kaupe I."/>
            <person name="Breitwieser F.P."/>
            <person name="Buerckstuemmer T."/>
            <person name="Bennett K.L."/>
            <person name="Superti-Furga G."/>
            <person name="Colinge J."/>
        </authorList>
    </citation>
    <scope>IDENTIFICATION BY MASS SPECTROMETRY [LARGE SCALE ANALYSIS]</scope>
</reference>
<reference key="11">
    <citation type="journal article" date="2012" name="Proc. Natl. Acad. Sci. U.S.A.">
        <title>N-terminal acetylome analyses and functional insights of the N-terminal acetyltransferase NatB.</title>
        <authorList>
            <person name="Van Damme P."/>
            <person name="Lasa M."/>
            <person name="Polevoda B."/>
            <person name="Gazquez C."/>
            <person name="Elosegui-Artola A."/>
            <person name="Kim D.S."/>
            <person name="De Juan-Pardo E."/>
            <person name="Demeyer K."/>
            <person name="Hole K."/>
            <person name="Larrea E."/>
            <person name="Timmerman E."/>
            <person name="Prieto J."/>
            <person name="Arnesen T."/>
            <person name="Sherman F."/>
            <person name="Gevaert K."/>
            <person name="Aldabe R."/>
        </authorList>
    </citation>
    <scope>ACETYLATION [LARGE SCALE ANALYSIS] AT MET-1</scope>
    <scope>IDENTIFICATION BY MASS SPECTROMETRY [LARGE SCALE ANALYSIS]</scope>
</reference>
<reference key="12">
    <citation type="journal article" date="2013" name="J. Proteome Res.">
        <title>Toward a comprehensive characterization of a human cancer cell phosphoproteome.</title>
        <authorList>
            <person name="Zhou H."/>
            <person name="Di Palma S."/>
            <person name="Preisinger C."/>
            <person name="Peng M."/>
            <person name="Polat A.N."/>
            <person name="Heck A.J."/>
            <person name="Mohammed S."/>
        </authorList>
    </citation>
    <scope>PHOSPHORYLATION [LARGE SCALE ANALYSIS] AT SER-116</scope>
    <scope>IDENTIFICATION BY MASS SPECTROMETRY [LARGE SCALE ANALYSIS]</scope>
    <source>
        <tissue>Cervix carcinoma</tissue>
    </source>
</reference>
<reference key="13">
    <citation type="journal article" date="2014" name="J. Proteomics">
        <title>An enzyme assisted RP-RPLC approach for in-depth analysis of human liver phosphoproteome.</title>
        <authorList>
            <person name="Bian Y."/>
            <person name="Song C."/>
            <person name="Cheng K."/>
            <person name="Dong M."/>
            <person name="Wang F."/>
            <person name="Huang J."/>
            <person name="Sun D."/>
            <person name="Wang L."/>
            <person name="Ye M."/>
            <person name="Zou H."/>
        </authorList>
    </citation>
    <scope>IDENTIFICATION BY MASS SPECTROMETRY [LARGE SCALE ANALYSIS]</scope>
    <source>
        <tissue>Liver</tissue>
    </source>
</reference>
<reference key="14">
    <citation type="journal article" date="2015" name="Proteomics">
        <title>N-terminome analysis of the human mitochondrial proteome.</title>
        <authorList>
            <person name="Vaca Jacome A.S."/>
            <person name="Rabilloud T."/>
            <person name="Schaeffer-Reiss C."/>
            <person name="Rompais M."/>
            <person name="Ayoub D."/>
            <person name="Lane L."/>
            <person name="Bairoch A."/>
            <person name="Van Dorsselaer A."/>
            <person name="Carapito C."/>
        </authorList>
    </citation>
    <scope>ACETYLATION [LARGE SCALE ANALYSIS] AT MET-1</scope>
    <scope>IDENTIFICATION BY MASS SPECTROMETRY [LARGE SCALE ANALYSIS]</scope>
</reference>
<reference key="15">
    <citation type="journal article" date="2019" name="J. Biol. Chem.">
        <title>The E3 ubiquitin ligase MARCH2 regulates ERGIC3-dependent trafficking of secretory proteins.</title>
        <authorList>
            <person name="Yoo W."/>
            <person name="Cho E.B."/>
            <person name="Kim S."/>
            <person name="Yoon J.B."/>
        </authorList>
    </citation>
    <scope>FUNCTION</scope>
    <scope>SUBUNIT</scope>
    <scope>IDENTIFICATION IN A COMPLEX WITH ERGIC1 AND ERGIC2</scope>
    <scope>INTERACTION WITH MARCHF2; SERPINA1; ERGIC1; ERGIC2 AND HP</scope>
    <scope>UBIQUITINATED</scope>
    <scope>MUTAGENESIS OF 1-MET--CYS-25; LYS-6; LYS-8; LYS-15 AND LYS-23</scope>
</reference>
<reference key="16">
    <citation type="journal article" date="2006" name="Science">
        <title>The consensus coding sequences of human breast and colorectal cancers.</title>
        <authorList>
            <person name="Sjoeblom T."/>
            <person name="Jones S."/>
            <person name="Wood L.D."/>
            <person name="Parsons D.W."/>
            <person name="Lin J."/>
            <person name="Barber T.D."/>
            <person name="Mandelker D."/>
            <person name="Leary R.J."/>
            <person name="Ptak J."/>
            <person name="Silliman N."/>
            <person name="Szabo S."/>
            <person name="Buckhaults P."/>
            <person name="Farrell C."/>
            <person name="Meeh P."/>
            <person name="Markowitz S.D."/>
            <person name="Willis J."/>
            <person name="Dawson D."/>
            <person name="Willson J.K.V."/>
            <person name="Gazdar A.F."/>
            <person name="Hartigan J."/>
            <person name="Wu L."/>
            <person name="Liu C."/>
            <person name="Parmigiani G."/>
            <person name="Park B.H."/>
            <person name="Bachman K.E."/>
            <person name="Papadopoulos N."/>
            <person name="Vogelstein B."/>
            <person name="Kinzler K.W."/>
            <person name="Velculescu V.E."/>
        </authorList>
    </citation>
    <scope>VARIANT [LARGE SCALE ANALYSIS] LYS-297</scope>
</reference>
<keyword id="KW-0007">Acetylation</keyword>
<keyword id="KW-0025">Alternative splicing</keyword>
<keyword id="KW-0256">Endoplasmic reticulum</keyword>
<keyword id="KW-0931">ER-Golgi transport</keyword>
<keyword id="KW-0325">Glycoprotein</keyword>
<keyword id="KW-0333">Golgi apparatus</keyword>
<keyword id="KW-0472">Membrane</keyword>
<keyword id="KW-0597">Phosphoprotein</keyword>
<keyword id="KW-1267">Proteomics identification</keyword>
<keyword id="KW-1185">Reference proteome</keyword>
<keyword id="KW-0812">Transmembrane</keyword>
<keyword id="KW-1133">Transmembrane helix</keyword>
<keyword id="KW-0813">Transport</keyword>
<proteinExistence type="evidence at protein level"/>
<evidence type="ECO:0000255" key="1"/>
<evidence type="ECO:0000269" key="2">
    <source>
    </source>
</evidence>
<evidence type="ECO:0000269" key="3">
    <source>
    </source>
</evidence>
<evidence type="ECO:0000269" key="4">
    <source>
    </source>
</evidence>
<evidence type="ECO:0000269" key="5">
    <source>
    </source>
</evidence>
<evidence type="ECO:0000303" key="6">
    <source>
    </source>
</evidence>
<evidence type="ECO:0000303" key="7">
    <source>
    </source>
</evidence>
<evidence type="ECO:0000305" key="8"/>
<evidence type="ECO:0007744" key="9">
    <source>
    </source>
</evidence>
<evidence type="ECO:0007744" key="10">
    <source>
    </source>
</evidence>
<evidence type="ECO:0007744" key="11">
    <source>
    </source>
</evidence>
<feature type="chain" id="PRO_0000097640" description="Endoplasmic reticulum-Golgi intermediate compartment protein 3">
    <location>
        <begin position="1"/>
        <end position="383"/>
    </location>
</feature>
<feature type="topological domain" description="Cytoplasmic" evidence="1">
    <location>
        <begin position="1"/>
        <end position="25"/>
    </location>
</feature>
<feature type="transmembrane region" description="Helical" evidence="1">
    <location>
        <begin position="26"/>
        <end position="46"/>
    </location>
</feature>
<feature type="topological domain" description="Lumenal" evidence="1">
    <location>
        <begin position="47"/>
        <end position="341"/>
    </location>
</feature>
<feature type="transmembrane region" description="Helical" evidence="1">
    <location>
        <begin position="342"/>
        <end position="362"/>
    </location>
</feature>
<feature type="topological domain" description="Cytoplasmic" evidence="1">
    <location>
        <begin position="363"/>
        <end position="383"/>
    </location>
</feature>
<feature type="region of interest" description="Required for MARCHF2-mediated degradation" evidence="5">
    <location>
        <begin position="1"/>
        <end position="25"/>
    </location>
</feature>
<feature type="site" description="Ubiquitinated; by MARCHF2" evidence="5">
    <location>
        <position position="8"/>
    </location>
</feature>
<feature type="modified residue" description="N-acetylmethionine" evidence="9 11">
    <location>
        <position position="1"/>
    </location>
</feature>
<feature type="modified residue" description="Phosphoserine" evidence="10">
    <location>
        <position position="116"/>
    </location>
</feature>
<feature type="glycosylation site" description="N-linked (GlcNAc...) asparagine" evidence="4">
    <location>
        <position position="241"/>
    </location>
</feature>
<feature type="glycosylation site" description="N-linked (GlcNAc...) asparagine" evidence="1">
    <location>
        <position position="266"/>
    </location>
</feature>
<feature type="splice variant" id="VSP_008652" description="In isoform 2." evidence="6">
    <original>VH</original>
    <variation>GE</variation>
    <location>
        <begin position="229"/>
        <end position="230"/>
    </location>
</feature>
<feature type="splice variant" id="VSP_019208" description="In isoform 3." evidence="7">
    <original>V</original>
    <variation>VHAVEI</variation>
    <location>
        <position position="229"/>
    </location>
</feature>
<feature type="splice variant" id="VSP_008653" description="In isoform 2." evidence="6">
    <location>
        <begin position="231"/>
        <end position="383"/>
    </location>
</feature>
<feature type="sequence variant" id="VAR_048939" description="In dbSNP:rs35505616.">
    <original>I</original>
    <variation>L</variation>
    <location>
        <position position="113"/>
    </location>
</feature>
<feature type="sequence variant" id="VAR_036553" description="In a colorectal cancer sample; somatic mutation." evidence="3">
    <original>T</original>
    <variation>K</variation>
    <location>
        <position position="297"/>
    </location>
</feature>
<feature type="mutagenesis site" description="Abolishes MARCHF2-mediated degradation." evidence="5">
    <location>
        <begin position="1"/>
        <end position="25"/>
    </location>
</feature>
<feature type="mutagenesis site" description="Reduces MARCHF2-mediated ubiquitination and degradation. No effect on interaction with MARCHF2. Reduces MARCHF2-mediated ubiquitination and degradation by 90%; when associated with R-8." evidence="5">
    <original>K</original>
    <variation>R</variation>
    <location>
        <position position="6"/>
    </location>
</feature>
<feature type="mutagenesis site" description="Reduces MARCHF2-mediated ubiquitination and degradation. No effect on interaction with MARCHF2. Reduces MARCHF2-mediated ubiquitination and degradation by 90%; when associated with R-8." evidence="5">
    <original>K</original>
    <variation>R</variation>
    <location>
        <position position="8"/>
    </location>
</feature>
<feature type="mutagenesis site" description="No effect on MARCHF2-mediated ubiquitination and degradation." evidence="5">
    <original>K</original>
    <variation>R</variation>
    <location>
        <position position="15"/>
    </location>
</feature>
<feature type="mutagenesis site" description="No effect on MARCHF2-mediated ubiquitination and degradation." evidence="5">
    <original>K</original>
    <variation>R</variation>
    <location>
        <position position="23"/>
    </location>
</feature>
<feature type="sequence conflict" description="In Ref. 3; BAC11054." evidence="8" ref="3">
    <original>N</original>
    <variation>D</variation>
    <location>
        <position position="239"/>
    </location>
</feature>
<organism>
    <name type="scientific">Homo sapiens</name>
    <name type="common">Human</name>
    <dbReference type="NCBI Taxonomy" id="9606"/>
    <lineage>
        <taxon>Eukaryota</taxon>
        <taxon>Metazoa</taxon>
        <taxon>Chordata</taxon>
        <taxon>Craniata</taxon>
        <taxon>Vertebrata</taxon>
        <taxon>Euteleostomi</taxon>
        <taxon>Mammalia</taxon>
        <taxon>Eutheria</taxon>
        <taxon>Euarchontoglires</taxon>
        <taxon>Primates</taxon>
        <taxon>Haplorrhini</taxon>
        <taxon>Catarrhini</taxon>
        <taxon>Hominidae</taxon>
        <taxon>Homo</taxon>
    </lineage>
</organism>